<keyword id="KW-0002">3D-structure</keyword>
<keyword id="KW-0007">Acetylation</keyword>
<keyword id="KW-0025">Alternative splicing</keyword>
<keyword id="KW-0067">ATP-binding</keyword>
<keyword id="KW-1003">Cell membrane</keyword>
<keyword id="KW-0156">Chromatin regulator</keyword>
<keyword id="KW-0175">Coiled coil</keyword>
<keyword id="KW-0963">Cytoplasm</keyword>
<keyword id="KW-0967">Endosome</keyword>
<keyword id="KW-0418">Kinase</keyword>
<keyword id="KW-0472">Membrane</keyword>
<keyword id="KW-0547">Nucleotide-binding</keyword>
<keyword id="KW-0539">Nucleus</keyword>
<keyword id="KW-0597">Phosphoprotein</keyword>
<keyword id="KW-1267">Proteomics identification</keyword>
<keyword id="KW-1185">Reference proteome</keyword>
<keyword id="KW-0677">Repeat</keyword>
<keyword id="KW-0723">Serine/threonine-protein kinase</keyword>
<keyword id="KW-0804">Transcription</keyword>
<keyword id="KW-0805">Transcription regulation</keyword>
<keyword id="KW-0808">Transferase</keyword>
<keyword id="KW-0832">Ubl conjugation</keyword>
<protein>
    <recommendedName>
        <fullName>Serine/threonine-protein kinase N1</fullName>
        <ecNumber evidence="22">2.7.11.13</ecNumber>
    </recommendedName>
    <alternativeName>
        <fullName>Protease-activated kinase 1</fullName>
        <shortName>PAK-1</shortName>
    </alternativeName>
    <alternativeName>
        <fullName>Protein kinase C-like 1</fullName>
    </alternativeName>
    <alternativeName>
        <fullName>Protein kinase C-like PKN</fullName>
    </alternativeName>
    <alternativeName>
        <fullName>Protein kinase PKN-alpha</fullName>
    </alternativeName>
    <alternativeName>
        <fullName>Protein-kinase C-related kinase 1</fullName>
    </alternativeName>
    <alternativeName>
        <fullName>Serine-threonine protein kinase N</fullName>
    </alternativeName>
</protein>
<accession>Q16512</accession>
<accession>A8K7W5</accession>
<accession>B2R9R4</accession>
<accession>B3KVN3</accession>
<accession>Q15143</accession>
<accession>Q504U4</accession>
<accession>Q8IUV5</accession>
<accession>Q9UD44</accession>
<feature type="initiator methionine" description="Removed" evidence="43 48">
    <location>
        <position position="1"/>
    </location>
</feature>
<feature type="chain" id="PRO_0000055719" description="Serine/threonine-protein kinase N1">
    <location>
        <begin position="2"/>
        <end position="942"/>
    </location>
</feature>
<feature type="domain" description="REM-1 1" evidence="7">
    <location>
        <begin position="25"/>
        <end position="100"/>
    </location>
</feature>
<feature type="domain" description="REM-1 2" evidence="7">
    <location>
        <begin position="112"/>
        <end position="193"/>
    </location>
</feature>
<feature type="domain" description="REM-1 3" evidence="7">
    <location>
        <begin position="201"/>
        <end position="280"/>
    </location>
</feature>
<feature type="domain" description="C2" evidence="4">
    <location>
        <begin position="307"/>
        <end position="470"/>
    </location>
</feature>
<feature type="domain" description="Protein kinase" evidence="5">
    <location>
        <begin position="615"/>
        <end position="874"/>
    </location>
</feature>
<feature type="domain" description="AGC-kinase C-terminal" evidence="6">
    <location>
        <begin position="875"/>
        <end position="942"/>
    </location>
</feature>
<feature type="region of interest" description="Disordered" evidence="9">
    <location>
        <begin position="102"/>
        <end position="121"/>
    </location>
</feature>
<feature type="region of interest" description="Important for interaction with bacterial SspH1 and SspH1-mediated polyubiquitination" evidence="27">
    <location>
        <begin position="181"/>
        <end position="185"/>
    </location>
</feature>
<feature type="region of interest" description="Disordered" evidence="9">
    <location>
        <begin position="341"/>
        <end position="363"/>
    </location>
</feature>
<feature type="region of interest" description="Disordered" evidence="9">
    <location>
        <begin position="553"/>
        <end position="603"/>
    </location>
</feature>
<feature type="compositionally biased region" description="Polar residues" evidence="9">
    <location>
        <begin position="581"/>
        <end position="596"/>
    </location>
</feature>
<feature type="active site" description="Proton acceptor" evidence="5 8">
    <location>
        <position position="740"/>
    </location>
</feature>
<feature type="binding site" evidence="5">
    <location>
        <begin position="621"/>
        <end position="629"/>
    </location>
    <ligand>
        <name>ATP</name>
        <dbReference type="ChEBI" id="CHEBI:30616"/>
    </ligand>
</feature>
<feature type="binding site" evidence="5">
    <location>
        <position position="644"/>
    </location>
    <ligand>
        <name>ATP</name>
        <dbReference type="ChEBI" id="CHEBI:30616"/>
    </ligand>
</feature>
<feature type="site" description="Cleavage; by caspase-3">
    <location>
        <begin position="108"/>
        <end position="109"/>
    </location>
</feature>
<feature type="site" description="Cleavage; by caspase-3">
    <location>
        <begin position="454"/>
        <end position="455"/>
    </location>
</feature>
<feature type="site" description="Cleavage; by caspase-3">
    <location>
        <begin position="558"/>
        <end position="559"/>
    </location>
</feature>
<feature type="modified residue" description="N-acetylalanine" evidence="43 48">
    <location>
        <position position="2"/>
    </location>
</feature>
<feature type="modified residue" description="Phosphoserine" evidence="49">
    <location>
        <position position="69"/>
    </location>
</feature>
<feature type="modified residue" description="Phosphoserine" evidence="42 45">
    <location>
        <position position="205"/>
    </location>
</feature>
<feature type="modified residue" description="Phosphoserine" evidence="3">
    <location>
        <position position="374"/>
    </location>
</feature>
<feature type="modified residue" description="N6-acetyllysine" evidence="44">
    <location>
        <position position="448"/>
    </location>
</feature>
<feature type="modified residue" description="Phosphoserine" evidence="39 41 45 46 49">
    <location>
        <position position="533"/>
    </location>
</feature>
<feature type="modified residue" description="Phosphoserine" evidence="41 42 45 46 49">
    <location>
        <position position="537"/>
    </location>
</feature>
<feature type="modified residue" description="Phosphoserine" evidence="49">
    <location>
        <position position="540"/>
    </location>
</feature>
<feature type="modified residue" description="Phosphoserine" evidence="41 45">
    <location>
        <position position="559"/>
    </location>
</feature>
<feature type="modified residue" description="Phosphoserine" evidence="39 41 45 46 47 49">
    <location>
        <position position="562"/>
    </location>
</feature>
<feature type="modified residue" description="Phosphoserine" evidence="49">
    <location>
        <position position="608"/>
    </location>
</feature>
<feature type="modified residue" description="Phosphothreonine; by PDPK1" evidence="11">
    <location>
        <position position="774"/>
    </location>
</feature>
<feature type="modified residue" description="Phosphothreonine" evidence="40">
    <location>
        <position position="778"/>
    </location>
</feature>
<feature type="modified residue" description="Phosphothreonine" evidence="45">
    <location>
        <position position="914"/>
    </location>
</feature>
<feature type="modified residue" description="Phosphoserine" evidence="41 45 49 50">
    <location>
        <position position="916"/>
    </location>
</feature>
<feature type="splice variant" id="VSP_038143" description="In isoform 2." evidence="36">
    <original>MASDAVQ</original>
    <variation>MAEANNPSEQELE</variation>
    <location>
        <begin position="1"/>
        <end position="7"/>
    </location>
</feature>
<feature type="splice variant" id="VSP_039213" description="In isoform 3." evidence="37">
    <original>S</original>
    <variation>R</variation>
    <location>
        <position position="603"/>
    </location>
</feature>
<feature type="splice variant" id="VSP_039214" description="In isoform 3." evidence="37">
    <location>
        <begin position="604"/>
        <end position="942"/>
    </location>
</feature>
<feature type="sequence variant" id="VAR_042337" description="In a metastatic melanoma sample; somatic mutation; dbSNP:rs267605306." evidence="20">
    <original>R</original>
    <variation>C</variation>
    <location>
        <position position="185"/>
    </location>
</feature>
<feature type="sequence variant" id="VAR_042338" description="In dbSNP:rs1287763348." evidence="20">
    <original>A</original>
    <variation>E</variation>
    <location>
        <position position="197"/>
    </location>
</feature>
<feature type="sequence variant" id="VAR_042339" description="In dbSNP:rs35132656." evidence="20">
    <original>R</original>
    <variation>W</variation>
    <location>
        <position position="436"/>
    </location>
</feature>
<feature type="sequence variant" id="VAR_042340" description="In dbSNP:rs56273055." evidence="20">
    <original>R</original>
    <variation>Q</variation>
    <location>
        <position position="520"/>
    </location>
</feature>
<feature type="sequence variant" id="VAR_042341" description="In dbSNP:rs34309238." evidence="15 20">
    <original>L</original>
    <variation>I</variation>
    <location>
        <position position="555"/>
    </location>
</feature>
<feature type="sequence variant" id="VAR_042342" description="In dbSNP:rs35416389." evidence="20">
    <original>R</original>
    <variation>Q</variation>
    <location>
        <position position="635"/>
    </location>
</feature>
<feature type="sequence variant" id="VAR_042343" description="In dbSNP:rs2230539." evidence="20 28">
    <original>I</original>
    <variation>V</variation>
    <location>
        <position position="718"/>
    </location>
</feature>
<feature type="sequence variant" id="VAR_042344" description="In a breast infiltrating ductal carcinoma sample; somatic mutation." evidence="20">
    <original>F</original>
    <variation>L</variation>
    <location>
        <position position="873"/>
    </location>
</feature>
<feature type="sequence variant" id="VAR_014937" description="In dbSNP:rs10846." evidence="15 16 20">
    <original>V</original>
    <variation>I</variation>
    <location>
        <position position="901"/>
    </location>
</feature>
<feature type="sequence variant" id="VAR_042345" description="In a colorectal adenocarcinoma sample; somatic mutation." evidence="20">
    <original>A</original>
    <variation>V</variation>
    <location>
        <position position="921"/>
    </location>
</feature>
<feature type="mutagenesis site" description="Abolishes cleavage by caspase-3 and formation of AF1 fragment." evidence="35">
    <original>D</original>
    <variation>A</variation>
    <location>
        <position position="108"/>
    </location>
</feature>
<feature type="mutagenesis site" description="Abolishes interaction with bacterial SspH1." evidence="27">
    <original>R</original>
    <variation>A</variation>
    <location>
        <position position="181"/>
    </location>
</feature>
<feature type="mutagenesis site" description="Decreases interaction with bacterial SspH1." evidence="27">
    <original>R</original>
    <variation>K</variation>
    <location>
        <position position="181"/>
    </location>
</feature>
<feature type="mutagenesis site" description="Abolishes interaction with bacterial SspH1." evidence="27">
    <original>R</original>
    <variation>A</variation>
    <location>
        <position position="185"/>
    </location>
</feature>
<feature type="mutagenesis site" description="Abolishes cleavage by caspase-3 and formation of 70 kDa fragment." evidence="35">
    <original>D</original>
    <variation>A</variation>
    <location>
        <position position="451"/>
    </location>
</feature>
<feature type="mutagenesis site" description="Abolishes cleavage by caspase-3 and formation of 70 kDa fragment." evidence="35">
    <original>D</original>
    <variation>A</variation>
    <location>
        <position position="454"/>
    </location>
</feature>
<feature type="mutagenesis site" description="Abolishes cleavage by caspase-3 and formation of AF3 fragment." evidence="35">
    <original>D</original>
    <variation>A</variation>
    <location>
        <position position="558"/>
    </location>
</feature>
<feature type="mutagenesis site" description="Abolishes cleavage by caspase-3 and formation of AF3 fragment." evidence="35">
    <original>D</original>
    <variation>A</variation>
    <location>
        <position position="560"/>
    </location>
</feature>
<feature type="mutagenesis site" description="Abolishes Serine/threonine-protein kinase activity." evidence="22 29">
    <original>K</original>
    <variation>E</variation>
    <location>
        <position position="644"/>
    </location>
</feature>
<feature type="mutagenesis site" description="Substantial reduction of autophosphorylation." evidence="22 29">
    <original>K</original>
    <variation>R</variation>
    <location>
        <position position="644"/>
    </location>
</feature>
<feature type="sequence conflict" description="In Ref. 2; AAB33345/AAC50209." evidence="38" ref="2">
    <original>G</original>
    <variation>D</variation>
    <location>
        <position position="191"/>
    </location>
</feature>
<feature type="sequence conflict" description="In Ref. 3; BAG36611." evidence="38" ref="3">
    <original>S</original>
    <variation>P</variation>
    <location>
        <position position="562"/>
    </location>
</feature>
<feature type="sequence conflict" description="In Ref. 6; no nucleotide entry." evidence="38" ref="6">
    <original>I</original>
    <variation>T</variation>
    <location>
        <position position="736"/>
    </location>
</feature>
<feature type="sequence conflict" description="In Ref. 6; no nucleotide entry." evidence="38" ref="6">
    <original>T</original>
    <variation>A</variation>
    <location>
        <position position="750"/>
    </location>
</feature>
<feature type="sequence conflict" description="In Ref. 6; no nucleotide entry." evidence="38" ref="6">
    <original>G</original>
    <variation>A</variation>
    <location>
        <position position="800"/>
    </location>
</feature>
<feature type="sequence conflict" description="In Ref. 3; BAG36611." evidence="38" ref="3">
    <original>E</original>
    <variation>G</variation>
    <location>
        <position position="812"/>
    </location>
</feature>
<feature type="sequence conflict" description="In Ref. 3; BAG53845." evidence="38" ref="3">
    <original>L</original>
    <variation>P</variation>
    <location>
        <position position="887"/>
    </location>
</feature>
<feature type="helix" evidence="51">
    <location>
        <begin position="15"/>
        <end position="18"/>
    </location>
</feature>
<feature type="helix" evidence="51">
    <location>
        <begin position="29"/>
        <end position="66"/>
    </location>
</feature>
<feature type="helix" evidence="51">
    <location>
        <begin position="71"/>
        <end position="95"/>
    </location>
</feature>
<feature type="turn" evidence="52">
    <location>
        <begin position="122"/>
        <end position="124"/>
    </location>
</feature>
<feature type="helix" evidence="54">
    <location>
        <begin position="126"/>
        <end position="151"/>
    </location>
</feature>
<feature type="turn" evidence="54">
    <location>
        <begin position="157"/>
        <end position="159"/>
    </location>
</feature>
<feature type="helix" evidence="54">
    <location>
        <begin position="160"/>
        <end position="187"/>
    </location>
</feature>
<feature type="strand" evidence="53">
    <location>
        <begin position="194"/>
        <end position="196"/>
    </location>
</feature>
<feature type="helix" evidence="57">
    <location>
        <begin position="612"/>
        <end position="614"/>
    </location>
</feature>
<feature type="strand" evidence="57">
    <location>
        <begin position="615"/>
        <end position="624"/>
    </location>
</feature>
<feature type="strand" evidence="57">
    <location>
        <begin position="627"/>
        <end position="634"/>
    </location>
</feature>
<feature type="turn" evidence="57">
    <location>
        <begin position="635"/>
        <end position="637"/>
    </location>
</feature>
<feature type="strand" evidence="57">
    <location>
        <begin position="640"/>
        <end position="647"/>
    </location>
</feature>
<feature type="helix" evidence="57">
    <location>
        <begin position="648"/>
        <end position="653"/>
    </location>
</feature>
<feature type="helix" evidence="57">
    <location>
        <begin position="657"/>
        <end position="671"/>
    </location>
</feature>
<feature type="turn" evidence="56">
    <location>
        <begin position="672"/>
        <end position="674"/>
    </location>
</feature>
<feature type="strand" evidence="57">
    <location>
        <begin position="681"/>
        <end position="686"/>
    </location>
</feature>
<feature type="strand" evidence="57">
    <location>
        <begin position="688"/>
        <end position="696"/>
    </location>
</feature>
<feature type="strand" evidence="57">
    <location>
        <begin position="700"/>
        <end position="702"/>
    </location>
</feature>
<feature type="helix" evidence="57">
    <location>
        <begin position="703"/>
        <end position="706"/>
    </location>
</feature>
<feature type="turn" evidence="57">
    <location>
        <begin position="707"/>
        <end position="709"/>
    </location>
</feature>
<feature type="helix" evidence="57">
    <location>
        <begin position="714"/>
        <end position="733"/>
    </location>
</feature>
<feature type="helix" evidence="57">
    <location>
        <begin position="743"/>
        <end position="745"/>
    </location>
</feature>
<feature type="strand" evidence="57">
    <location>
        <begin position="746"/>
        <end position="748"/>
    </location>
</feature>
<feature type="strand" evidence="56">
    <location>
        <begin position="750"/>
        <end position="752"/>
    </location>
</feature>
<feature type="strand" evidence="57">
    <location>
        <begin position="754"/>
        <end position="756"/>
    </location>
</feature>
<feature type="strand" evidence="55">
    <location>
        <begin position="763"/>
        <end position="765"/>
    </location>
</feature>
<feature type="helix" evidence="55">
    <location>
        <begin position="779"/>
        <end position="781"/>
    </location>
</feature>
<feature type="helix" evidence="55">
    <location>
        <begin position="784"/>
        <end position="788"/>
    </location>
</feature>
<feature type="helix" evidence="57">
    <location>
        <begin position="794"/>
        <end position="810"/>
    </location>
</feature>
<feature type="helix" evidence="57">
    <location>
        <begin position="820"/>
        <end position="829"/>
    </location>
</feature>
<feature type="helix" evidence="57">
    <location>
        <begin position="840"/>
        <end position="849"/>
    </location>
</feature>
<feature type="turn" evidence="57">
    <location>
        <begin position="854"/>
        <end position="856"/>
    </location>
</feature>
<feature type="turn" evidence="57">
    <location>
        <begin position="862"/>
        <end position="864"/>
    </location>
</feature>
<feature type="helix" evidence="57">
    <location>
        <begin position="865"/>
        <end position="869"/>
    </location>
</feature>
<feature type="helix" evidence="57">
    <location>
        <begin position="872"/>
        <end position="874"/>
    </location>
</feature>
<feature type="helix" evidence="57">
    <location>
        <begin position="879"/>
        <end position="883"/>
    </location>
</feature>
<feature type="helix" evidence="57">
    <location>
        <begin position="906"/>
        <end position="909"/>
    </location>
</feature>
<feature type="helix" evidence="57">
    <location>
        <begin position="926"/>
        <end position="930"/>
    </location>
</feature>
<feature type="turn" evidence="57">
    <location>
        <begin position="931"/>
        <end position="934"/>
    </location>
</feature>
<name>PKN1_HUMAN</name>
<proteinExistence type="evidence at protein level"/>
<reference key="1">
    <citation type="journal article" date="1994" name="Biochem. Biophys. Res. Commun.">
        <title>A novel protein kinase with leucine zipper-like sequences: its catalytic domain is highly homologous to that of protein kinase C.</title>
        <authorList>
            <person name="Mukai H."/>
            <person name="Ono Y."/>
        </authorList>
    </citation>
    <scope>NUCLEOTIDE SEQUENCE [MRNA] (ISOFORM 1)</scope>
    <scope>MUTAGENESIS OF LYS-644</scope>
    <source>
        <tissue>Hippocampus</tissue>
    </source>
</reference>
<reference key="2">
    <citation type="journal article" date="1995" name="Eur. J. Biochem.">
        <title>Cloning and expression patterns of two members of a novel protein-kinase-C-related kinase family.</title>
        <authorList>
            <person name="Palmer R.H."/>
            <person name="Ridden J."/>
            <person name="Parker P.J."/>
        </authorList>
    </citation>
    <scope>NUCLEOTIDE SEQUENCE [MRNA] (ISOFORM 1)</scope>
    <source>
        <tissue>Fetal brain</tissue>
    </source>
</reference>
<reference key="3">
    <citation type="journal article" date="2004" name="Nat. Genet.">
        <title>Complete sequencing and characterization of 21,243 full-length human cDNAs.</title>
        <authorList>
            <person name="Ota T."/>
            <person name="Suzuki Y."/>
            <person name="Nishikawa T."/>
            <person name="Otsuki T."/>
            <person name="Sugiyama T."/>
            <person name="Irie R."/>
            <person name="Wakamatsu A."/>
            <person name="Hayashi K."/>
            <person name="Sato H."/>
            <person name="Nagai K."/>
            <person name="Kimura K."/>
            <person name="Makita H."/>
            <person name="Sekine M."/>
            <person name="Obayashi M."/>
            <person name="Nishi T."/>
            <person name="Shibahara T."/>
            <person name="Tanaka T."/>
            <person name="Ishii S."/>
            <person name="Yamamoto J."/>
            <person name="Saito K."/>
            <person name="Kawai Y."/>
            <person name="Isono Y."/>
            <person name="Nakamura Y."/>
            <person name="Nagahari K."/>
            <person name="Murakami K."/>
            <person name="Yasuda T."/>
            <person name="Iwayanagi T."/>
            <person name="Wagatsuma M."/>
            <person name="Shiratori A."/>
            <person name="Sudo H."/>
            <person name="Hosoiri T."/>
            <person name="Kaku Y."/>
            <person name="Kodaira H."/>
            <person name="Kondo H."/>
            <person name="Sugawara M."/>
            <person name="Takahashi M."/>
            <person name="Kanda K."/>
            <person name="Yokoi T."/>
            <person name="Furuya T."/>
            <person name="Kikkawa E."/>
            <person name="Omura Y."/>
            <person name="Abe K."/>
            <person name="Kamihara K."/>
            <person name="Katsuta N."/>
            <person name="Sato K."/>
            <person name="Tanikawa M."/>
            <person name="Yamazaki M."/>
            <person name="Ninomiya K."/>
            <person name="Ishibashi T."/>
            <person name="Yamashita H."/>
            <person name="Murakawa K."/>
            <person name="Fujimori K."/>
            <person name="Tanai H."/>
            <person name="Kimata M."/>
            <person name="Watanabe M."/>
            <person name="Hiraoka S."/>
            <person name="Chiba Y."/>
            <person name="Ishida S."/>
            <person name="Ono Y."/>
            <person name="Takiguchi S."/>
            <person name="Watanabe S."/>
            <person name="Yosida M."/>
            <person name="Hotuta T."/>
            <person name="Kusano J."/>
            <person name="Kanehori K."/>
            <person name="Takahashi-Fujii A."/>
            <person name="Hara H."/>
            <person name="Tanase T.-O."/>
            <person name="Nomura Y."/>
            <person name="Togiya S."/>
            <person name="Komai F."/>
            <person name="Hara R."/>
            <person name="Takeuchi K."/>
            <person name="Arita M."/>
            <person name="Imose N."/>
            <person name="Musashino K."/>
            <person name="Yuuki H."/>
            <person name="Oshima A."/>
            <person name="Sasaki N."/>
            <person name="Aotsuka S."/>
            <person name="Yoshikawa Y."/>
            <person name="Matsunawa H."/>
            <person name="Ichihara T."/>
            <person name="Shiohata N."/>
            <person name="Sano S."/>
            <person name="Moriya S."/>
            <person name="Momiyama H."/>
            <person name="Satoh N."/>
            <person name="Takami S."/>
            <person name="Terashima Y."/>
            <person name="Suzuki O."/>
            <person name="Nakagawa S."/>
            <person name="Senoh A."/>
            <person name="Mizoguchi H."/>
            <person name="Goto Y."/>
            <person name="Shimizu F."/>
            <person name="Wakebe H."/>
            <person name="Hishigaki H."/>
            <person name="Watanabe T."/>
            <person name="Sugiyama A."/>
            <person name="Takemoto M."/>
            <person name="Kawakami B."/>
            <person name="Yamazaki M."/>
            <person name="Watanabe K."/>
            <person name="Kumagai A."/>
            <person name="Itakura S."/>
            <person name="Fukuzumi Y."/>
            <person name="Fujimori Y."/>
            <person name="Komiyama M."/>
            <person name="Tashiro H."/>
            <person name="Tanigami A."/>
            <person name="Fujiwara T."/>
            <person name="Ono T."/>
            <person name="Yamada K."/>
            <person name="Fujii Y."/>
            <person name="Ozaki K."/>
            <person name="Hirao M."/>
            <person name="Ohmori Y."/>
            <person name="Kawabata A."/>
            <person name="Hikiji T."/>
            <person name="Kobatake N."/>
            <person name="Inagaki H."/>
            <person name="Ikema Y."/>
            <person name="Okamoto S."/>
            <person name="Okitani R."/>
            <person name="Kawakami T."/>
            <person name="Noguchi S."/>
            <person name="Itoh T."/>
            <person name="Shigeta K."/>
            <person name="Senba T."/>
            <person name="Matsumura K."/>
            <person name="Nakajima Y."/>
            <person name="Mizuno T."/>
            <person name="Morinaga M."/>
            <person name="Sasaki M."/>
            <person name="Togashi T."/>
            <person name="Oyama M."/>
            <person name="Hata H."/>
            <person name="Watanabe M."/>
            <person name="Komatsu T."/>
            <person name="Mizushima-Sugano J."/>
            <person name="Satoh T."/>
            <person name="Shirai Y."/>
            <person name="Takahashi Y."/>
            <person name="Nakagawa K."/>
            <person name="Okumura K."/>
            <person name="Nagase T."/>
            <person name="Nomura N."/>
            <person name="Kikuchi H."/>
            <person name="Masuho Y."/>
            <person name="Yamashita R."/>
            <person name="Nakai K."/>
            <person name="Yada T."/>
            <person name="Nakamura Y."/>
            <person name="Ohara O."/>
            <person name="Isogai T."/>
            <person name="Sugano S."/>
        </authorList>
    </citation>
    <scope>NUCLEOTIDE SEQUENCE [LARGE SCALE MRNA] (ISOFORMS 1 AND 2)</scope>
    <scope>VARIANTS ILE-555 AND ILE-901</scope>
    <source>
        <tissue>Kidney</tissue>
        <tissue>Synovium</tissue>
        <tissue>Thymus</tissue>
    </source>
</reference>
<reference key="4">
    <citation type="journal article" date="2004" name="Nature">
        <title>The DNA sequence and biology of human chromosome 19.</title>
        <authorList>
            <person name="Grimwood J."/>
            <person name="Gordon L.A."/>
            <person name="Olsen A.S."/>
            <person name="Terry A."/>
            <person name="Schmutz J."/>
            <person name="Lamerdin J.E."/>
            <person name="Hellsten U."/>
            <person name="Goodstein D."/>
            <person name="Couronne O."/>
            <person name="Tran-Gyamfi M."/>
            <person name="Aerts A."/>
            <person name="Altherr M."/>
            <person name="Ashworth L."/>
            <person name="Bajorek E."/>
            <person name="Black S."/>
            <person name="Branscomb E."/>
            <person name="Caenepeel S."/>
            <person name="Carrano A.V."/>
            <person name="Caoile C."/>
            <person name="Chan Y.M."/>
            <person name="Christensen M."/>
            <person name="Cleland C.A."/>
            <person name="Copeland A."/>
            <person name="Dalin E."/>
            <person name="Dehal P."/>
            <person name="Denys M."/>
            <person name="Detter J.C."/>
            <person name="Escobar J."/>
            <person name="Flowers D."/>
            <person name="Fotopulos D."/>
            <person name="Garcia C."/>
            <person name="Georgescu A.M."/>
            <person name="Glavina T."/>
            <person name="Gomez M."/>
            <person name="Gonzales E."/>
            <person name="Groza M."/>
            <person name="Hammon N."/>
            <person name="Hawkins T."/>
            <person name="Haydu L."/>
            <person name="Ho I."/>
            <person name="Huang W."/>
            <person name="Israni S."/>
            <person name="Jett J."/>
            <person name="Kadner K."/>
            <person name="Kimball H."/>
            <person name="Kobayashi A."/>
            <person name="Larionov V."/>
            <person name="Leem S.-H."/>
            <person name="Lopez F."/>
            <person name="Lou Y."/>
            <person name="Lowry S."/>
            <person name="Malfatti S."/>
            <person name="Martinez D."/>
            <person name="McCready P.M."/>
            <person name="Medina C."/>
            <person name="Morgan J."/>
            <person name="Nelson K."/>
            <person name="Nolan M."/>
            <person name="Ovcharenko I."/>
            <person name="Pitluck S."/>
            <person name="Pollard M."/>
            <person name="Popkie A.P."/>
            <person name="Predki P."/>
            <person name="Quan G."/>
            <person name="Ramirez L."/>
            <person name="Rash S."/>
            <person name="Retterer J."/>
            <person name="Rodriguez A."/>
            <person name="Rogers S."/>
            <person name="Salamov A."/>
            <person name="Salazar A."/>
            <person name="She X."/>
            <person name="Smith D."/>
            <person name="Slezak T."/>
            <person name="Solovyev V."/>
            <person name="Thayer N."/>
            <person name="Tice H."/>
            <person name="Tsai M."/>
            <person name="Ustaszewska A."/>
            <person name="Vo N."/>
            <person name="Wagner M."/>
            <person name="Wheeler J."/>
            <person name="Wu K."/>
            <person name="Xie G."/>
            <person name="Yang J."/>
            <person name="Dubchak I."/>
            <person name="Furey T.S."/>
            <person name="DeJong P."/>
            <person name="Dickson M."/>
            <person name="Gordon D."/>
            <person name="Eichler E.E."/>
            <person name="Pennacchio L.A."/>
            <person name="Richardson P."/>
            <person name="Stubbs L."/>
            <person name="Rokhsar D.S."/>
            <person name="Myers R.M."/>
            <person name="Rubin E.M."/>
            <person name="Lucas S.M."/>
        </authorList>
    </citation>
    <scope>NUCLEOTIDE SEQUENCE [LARGE SCALE GENOMIC DNA]</scope>
</reference>
<reference key="5">
    <citation type="journal article" date="2004" name="Genome Res.">
        <title>The status, quality, and expansion of the NIH full-length cDNA project: the Mammalian Gene Collection (MGC).</title>
        <authorList>
            <consortium name="The MGC Project Team"/>
        </authorList>
    </citation>
    <scope>NUCLEOTIDE SEQUENCE [LARGE SCALE MRNA] (ISOFORMS 1 AND 3)</scope>
    <scope>VARIANT ILE-901</scope>
    <source>
        <tissue>Brain</tissue>
        <tissue>Placenta</tissue>
    </source>
</reference>
<reference key="6">
    <citation type="journal article" date="1994" name="FEBS Lett.">
        <title>Identification of multiple, novel, protein kinase C-related gene products.</title>
        <authorList>
            <person name="Palmer R.H."/>
            <person name="Ridden J."/>
            <person name="Parker P.J."/>
        </authorList>
    </citation>
    <scope>NUCLEOTIDE SEQUENCE [MRNA] OF 700-800 (ISOFORMS 1/2)</scope>
    <scope>VARIANT VAL-718</scope>
</reference>
<reference key="7">
    <citation type="journal article" date="1996" name="FEBS Lett.">
        <title>PRK1 phosphorylates MARCKS at the PKC sites: serine 152, serine 156 and serine 163.</title>
        <authorList>
            <person name="Palmer R.H."/>
            <person name="Schonwasser D.C."/>
            <person name="Rahman D."/>
            <person name="Pappin D.J."/>
            <person name="Herget T."/>
            <person name="Parker P.J."/>
        </authorList>
    </citation>
    <scope>FUNCTION</scope>
</reference>
<reference key="8">
    <citation type="journal article" date="1996" name="J. Biol. Chem.">
        <title>PKN associates and phosphorylates the head-rod domain of neurofilament protein.</title>
        <authorList>
            <person name="Mukai H."/>
            <person name="Toshimori M."/>
            <person name="Shibata H."/>
            <person name="Kitagawa M."/>
            <person name="Shimakawa M."/>
            <person name="Miyahara M."/>
            <person name="Sunakawa H."/>
            <person name="Ono Y."/>
        </authorList>
    </citation>
    <scope>FUNCTION</scope>
</reference>
<reference key="9">
    <citation type="journal article" date="1996" name="Science">
        <title>Protein kinase N (PKN) and PKN-related protein rhophilin as targets of small GTPase Rho.</title>
        <authorList>
            <person name="Watanabe G."/>
            <person name="Saito Y."/>
            <person name="Madaule P."/>
            <person name="Ishizaki T."/>
            <person name="Fujisawa K."/>
            <person name="Morii N."/>
            <person name="Mukai H."/>
            <person name="Ono Y."/>
            <person name="Kakizuka A."/>
            <person name="Narumiya S."/>
        </authorList>
    </citation>
    <scope>ACTIVITY REGULATION</scope>
    <scope>INTERACTION WITH RHOA</scope>
</reference>
<reference key="10">
    <citation type="journal article" date="1997" name="Biochem. Biophys. Res. Commun.">
        <title>Domain-specific phosphorylation of vimentin and glial fibrillary acidic protein by PKN.</title>
        <authorList>
            <person name="Matsuzawa K."/>
            <person name="Kosako H."/>
            <person name="Inagaki N."/>
            <person name="Shibata H."/>
            <person name="Mukai H."/>
            <person name="Ono Y."/>
            <person name="Amano M."/>
            <person name="Kaibuchi K."/>
            <person name="Matsuura Y."/>
            <person name="Azuma I."/>
            <person name="Inagaki M."/>
        </authorList>
    </citation>
    <scope>FUNCTION</scope>
</reference>
<reference key="11">
    <citation type="journal article" date="1998" name="J. Biol. Chem.">
        <title>PRK1 is targeted to endosomes by the small GTPase, RhoB.</title>
        <authorList>
            <person name="Mellor H."/>
            <person name="Flynn P."/>
            <person name="Nobes C.D."/>
            <person name="Hall A."/>
            <person name="Parker P.J."/>
        </authorList>
    </citation>
    <scope>SUBCELLULAR LOCATION</scope>
    <scope>INTERACTION WITH RHOB</scope>
</reference>
<reference key="12">
    <citation type="journal article" date="1998" name="Proc. Natl. Acad. Sci. U.S.A.">
        <title>Proteolytic activation of PKN by caspase-3 or related protease during apoptosis.</title>
        <authorList>
            <person name="Takahashi M."/>
            <person name="Mukai H."/>
            <person name="Toshimori M."/>
            <person name="Miyamoto M."/>
            <person name="Ono Y."/>
        </authorList>
    </citation>
    <scope>ACTIVITY REGULATION</scope>
    <scope>PROTEOLYTIC PROCESSING</scope>
    <scope>MUTAGENESIS OF ASP-108; ASP-451; ASP-454; ASP-558 AND ASP-560</scope>
</reference>
<reference key="13">
    <citation type="journal article" date="2000" name="Proc. Natl. Acad. Sci. U.S.A.">
        <title>Phosphorylation of protein kinase N by phosphoinositide-dependent protein kinase-1 mediates insulin signals to the actin cytoskeleton.</title>
        <authorList>
            <person name="Dong L.Q."/>
            <person name="Landa L.R."/>
            <person name="Wick M.J."/>
            <person name="Zhu L."/>
            <person name="Mukai H."/>
            <person name="Ono Y."/>
            <person name="Liu F."/>
        </authorList>
    </citation>
    <scope>PHOSPHORYLATION AT THR-774 BY PDPK1</scope>
    <scope>INTERACTION WITH PDPK1</scope>
</reference>
<reference key="14">
    <citation type="journal article" date="2001" name="J. Biol. Chem.">
        <title>Phosphorylation of tau is regulated by PKN.</title>
        <authorList>
            <person name="Taniguchi T."/>
            <person name="Kawamata T."/>
            <person name="Mukai H."/>
            <person name="Hasegawa H."/>
            <person name="Isagawa T."/>
            <person name="Yasuda M."/>
            <person name="Hashimoto T."/>
            <person name="Terashima A."/>
            <person name="Nakai M."/>
            <person name="Mori H."/>
            <person name="Ono Y."/>
            <person name="Tanaka C."/>
        </authorList>
    </citation>
    <scope>FUNCTION</scope>
</reference>
<reference key="15">
    <citation type="journal article" date="2003" name="EMBO J.">
        <title>A novel inducible transactivation domain in the androgen receptor: implications for PRK in prostate cancer.</title>
        <authorList>
            <person name="Metzger E."/>
            <person name="Muller J.M."/>
            <person name="Ferrari S."/>
            <person name="Buettner R."/>
            <person name="Schule R."/>
        </authorList>
    </citation>
    <scope>FUNCTION</scope>
    <scope>SUBCELLULAR LOCATION</scope>
    <scope>INTERACTION WITH AR</scope>
</reference>
<reference key="16">
    <citation type="journal article" date="2006" name="Cell. Microbiol.">
        <title>A Salmonella type III secretion effector interacts with the mammalian serine/threonine protein kinase PKN1.</title>
        <authorList>
            <person name="Haraga A."/>
            <person name="Miller S.I."/>
        </authorList>
    </citation>
    <scope>INTERACTION WITH S.TYPHIMURIUM SSPH1 (MICROBIAL INFECTION)</scope>
</reference>
<reference key="17">
    <citation type="journal article" date="2006" name="J. Cell. Physiol.">
        <title>Pkn is a novel partner of cyclin T2a in muscle differentiation.</title>
        <authorList>
            <person name="Cottone G."/>
            <person name="Baldi A."/>
            <person name="Palescandolo E."/>
            <person name="Manente L."/>
            <person name="Penta R."/>
            <person name="Paggi M.G."/>
            <person name="De Luca A."/>
        </authorList>
    </citation>
    <scope>INTERACTION WITH CCNT2</scope>
</reference>
<reference key="18">
    <citation type="journal article" date="2006" name="Nat. Biotechnol.">
        <title>A probability-based approach for high-throughput protein phosphorylation analysis and site localization.</title>
        <authorList>
            <person name="Beausoleil S.A."/>
            <person name="Villen J."/>
            <person name="Gerber S.A."/>
            <person name="Rush J."/>
            <person name="Gygi S.P."/>
        </authorList>
    </citation>
    <scope>PHOSPHORYLATION [LARGE SCALE ANALYSIS] AT SER-533 AND SER-562</scope>
    <scope>IDENTIFICATION BY MASS SPECTROMETRY [LARGE SCALE ANALYSIS]</scope>
    <source>
        <tissue>Cervix carcinoma</tissue>
    </source>
</reference>
<reference key="19">
    <citation type="journal article" date="2007" name="EMBO J.">
        <title>Rho GTPases regulate PRK2/PKN2 to control entry into mitosis and exit from cytokinesis.</title>
        <authorList>
            <person name="Schmidt A."/>
            <person name="Durgan J."/>
            <person name="Magalhaes A."/>
            <person name="Hall A."/>
        </authorList>
    </citation>
    <scope>FUNCTION</scope>
    <scope>PHOSPHORYLATION</scope>
    <scope>SUBCELLULAR LOCATION</scope>
</reference>
<reference key="20">
    <citation type="journal article" date="2008" name="J. Proteome Res.">
        <title>Combining protein-based IMAC, peptide-based IMAC, and MudPIT for efficient phosphoproteomic analysis.</title>
        <authorList>
            <person name="Cantin G.T."/>
            <person name="Yi W."/>
            <person name="Lu B."/>
            <person name="Park S.K."/>
            <person name="Xu T."/>
            <person name="Lee J.-D."/>
            <person name="Yates J.R. III"/>
        </authorList>
    </citation>
    <scope>PHOSPHORYLATION [LARGE SCALE ANALYSIS] AT THR-778</scope>
    <scope>IDENTIFICATION BY MASS SPECTROMETRY [LARGE SCALE ANALYSIS]</scope>
    <source>
        <tissue>Cervix carcinoma</tissue>
    </source>
</reference>
<reference key="21">
    <citation type="journal article" date="2008" name="Mol. Cell">
        <title>Kinase-selective enrichment enables quantitative phosphoproteomics of the kinome across the cell cycle.</title>
        <authorList>
            <person name="Daub H."/>
            <person name="Olsen J.V."/>
            <person name="Bairlein M."/>
            <person name="Gnad F."/>
            <person name="Oppermann F.S."/>
            <person name="Korner R."/>
            <person name="Greff Z."/>
            <person name="Keri G."/>
            <person name="Stemmann O."/>
            <person name="Mann M."/>
        </authorList>
    </citation>
    <scope>PHOSPHORYLATION [LARGE SCALE ANALYSIS] AT SER-205 AND SER-537</scope>
    <scope>IDENTIFICATION BY MASS SPECTROMETRY [LARGE SCALE ANALYSIS]</scope>
    <source>
        <tissue>Cervix carcinoma</tissue>
    </source>
</reference>
<reference key="22">
    <citation type="journal article" date="2008" name="Nat. Cell Biol.">
        <title>Phosphorylation of histone H3 at threonine 11 establishes a novel chromatin mark for transcriptional regulation.</title>
        <authorList>
            <person name="Metzger E."/>
            <person name="Yin N."/>
            <person name="Wissmann M."/>
            <person name="Kunowska N."/>
            <person name="Fischer K."/>
            <person name="Friedrichs N."/>
            <person name="Patnaik D."/>
            <person name="Higgins J.M."/>
            <person name="Potier N."/>
            <person name="Scheidtmann K.H."/>
            <person name="Buettner R."/>
            <person name="Schule R."/>
        </authorList>
    </citation>
    <scope>FUNCTION</scope>
    <scope>CATALYTIC ACTIVITY</scope>
    <scope>MUTAGENESIS OF LYS-644</scope>
</reference>
<reference key="23">
    <citation type="journal article" date="2008" name="Proc. Natl. Acad. Sci. U.S.A.">
        <title>A quantitative atlas of mitotic phosphorylation.</title>
        <authorList>
            <person name="Dephoure N."/>
            <person name="Zhou C."/>
            <person name="Villen J."/>
            <person name="Beausoleil S.A."/>
            <person name="Bakalarski C.E."/>
            <person name="Elledge S.J."/>
            <person name="Gygi S.P."/>
        </authorList>
    </citation>
    <scope>PHOSPHORYLATION [LARGE SCALE ANALYSIS] AT SER-533; SER-537; SER-559; SER-562 AND SER-916</scope>
    <scope>IDENTIFICATION BY MASS SPECTROMETRY [LARGE SCALE ANALYSIS]</scope>
    <source>
        <tissue>Cervix carcinoma</tissue>
    </source>
</reference>
<reference key="24">
    <citation type="journal article" date="2009" name="Anal. Chem.">
        <title>Lys-N and trypsin cover complementary parts of the phosphoproteome in a refined SCX-based approach.</title>
        <authorList>
            <person name="Gauci S."/>
            <person name="Helbig A.O."/>
            <person name="Slijper M."/>
            <person name="Krijgsveld J."/>
            <person name="Heck A.J."/>
            <person name="Mohammed S."/>
        </authorList>
    </citation>
    <scope>ACETYLATION [LARGE SCALE ANALYSIS] AT ALA-2</scope>
    <scope>CLEAVAGE OF INITIATOR METHIONINE [LARGE SCALE ANALYSIS]</scope>
    <scope>IDENTIFICATION BY MASS SPECTROMETRY [LARGE SCALE ANALYSIS]</scope>
</reference>
<reference key="25">
    <citation type="journal article" date="2009" name="Sci. Signal.">
        <title>Quantitative phosphoproteomic analysis of T cell receptor signaling reveals system-wide modulation of protein-protein interactions.</title>
        <authorList>
            <person name="Mayya V."/>
            <person name="Lundgren D.H."/>
            <person name="Hwang S.-I."/>
            <person name="Rezaul K."/>
            <person name="Wu L."/>
            <person name="Eng J.K."/>
            <person name="Rodionov V."/>
            <person name="Han D.K."/>
        </authorList>
    </citation>
    <scope>PHOSPHORYLATION [LARGE SCALE ANALYSIS] AT SER-205; SER-533; SER-537; SER-559; SER-562; THR-914 AND SER-916</scope>
    <scope>IDENTIFICATION BY MASS SPECTROMETRY [LARGE SCALE ANALYSIS]</scope>
    <source>
        <tissue>Leukemic T-cell</tissue>
    </source>
</reference>
<reference key="26">
    <citation type="journal article" date="2009" name="Science">
        <title>Lysine acetylation targets protein complexes and co-regulates major cellular functions.</title>
        <authorList>
            <person name="Choudhary C."/>
            <person name="Kumar C."/>
            <person name="Gnad F."/>
            <person name="Nielsen M.L."/>
            <person name="Rehman M."/>
            <person name="Walther T.C."/>
            <person name="Olsen J.V."/>
            <person name="Mann M."/>
        </authorList>
    </citation>
    <scope>ACETYLATION [LARGE SCALE ANALYSIS] AT LYS-448</scope>
    <scope>IDENTIFICATION BY MASS SPECTROMETRY [LARGE SCALE ANALYSIS]</scope>
</reference>
<reference key="27">
    <citation type="journal article" date="2010" name="FEBS Lett.">
        <title>Protein kinase C-related kinase targets nuclear localization signals in a subset of class IIa histone deacetylases.</title>
        <authorList>
            <person name="Harrison B.C."/>
            <person name="Huynh K."/>
            <person name="Lundgaard G.L."/>
            <person name="Helmke S.M."/>
            <person name="Perryman M.B."/>
            <person name="McKinsey T.A."/>
        </authorList>
    </citation>
    <scope>FUNCTION</scope>
    <scope>BIOPHYSICOCHEMICAL PROPERTIES</scope>
</reference>
<reference key="28">
    <citation type="journal article" date="2010" name="Nature">
        <title>Phosphorylation of histone H3T6 by PKCbeta(I) controls demethylation at histone H3K4.</title>
        <authorList>
            <person name="Metzger E."/>
            <person name="Imhof A."/>
            <person name="Patel D."/>
            <person name="Kahl P."/>
            <person name="Hoffmeyer K."/>
            <person name="Friedrichs N."/>
            <person name="Muller J.M."/>
            <person name="Greschik H."/>
            <person name="Kirfel J."/>
            <person name="Ji S."/>
            <person name="Kunowska N."/>
            <person name="Beisenherz-Huss C."/>
            <person name="Gunther T."/>
            <person name="Buettner R."/>
            <person name="Schule R."/>
        </authorList>
    </citation>
    <scope>INTERACTION WITH PRKCB</scope>
</reference>
<reference key="29">
    <citation type="journal article" date="2010" name="Sci. Signal.">
        <title>Quantitative phosphoproteomics reveals widespread full phosphorylation site occupancy during mitosis.</title>
        <authorList>
            <person name="Olsen J.V."/>
            <person name="Vermeulen M."/>
            <person name="Santamaria A."/>
            <person name="Kumar C."/>
            <person name="Miller M.L."/>
            <person name="Jensen L.J."/>
            <person name="Gnad F."/>
            <person name="Cox J."/>
            <person name="Jensen T.S."/>
            <person name="Nigg E.A."/>
            <person name="Brunak S."/>
            <person name="Mann M."/>
        </authorList>
    </citation>
    <scope>PHOSPHORYLATION [LARGE SCALE ANALYSIS] AT SER-533; SER-537 AND SER-562</scope>
    <scope>IDENTIFICATION BY MASS SPECTROMETRY [LARGE SCALE ANALYSIS]</scope>
    <source>
        <tissue>Cervix carcinoma</tissue>
    </source>
</reference>
<reference key="30">
    <citation type="journal article" date="2011" name="BMC Syst. Biol.">
        <title>Initial characterization of the human central proteome.</title>
        <authorList>
            <person name="Burkard T.R."/>
            <person name="Planyavsky M."/>
            <person name="Kaupe I."/>
            <person name="Breitwieser F.P."/>
            <person name="Buerckstuemmer T."/>
            <person name="Bennett K.L."/>
            <person name="Superti-Furga G."/>
            <person name="Colinge J."/>
        </authorList>
    </citation>
    <scope>IDENTIFICATION BY MASS SPECTROMETRY [LARGE SCALE ANALYSIS]</scope>
</reference>
<reference key="31">
    <citation type="journal article" date="2011" name="J. Biol. Chem.">
        <title>A-kinase anchoring protein (AKAP)-Lbc anchors a PKN-based signaling complex involved in alpha1-adrenergic receptor-induced p38 activation.</title>
        <authorList>
            <person name="Cariolato L."/>
            <person name="Cavin S."/>
            <person name="Diviani D."/>
        </authorList>
    </citation>
    <scope>FUNCTION</scope>
    <scope>IDENTIFICATION IN A COMPLEX WITH AKAP13; MAPK14; ZAK AND MAP2K3</scope>
</reference>
<reference key="32">
    <citation type="journal article" date="2011" name="PLoS ONE">
        <title>Regulatory domain selectivity in the cell-type specific PKN-dependence of cell migration.</title>
        <authorList>
            <person name="Lachmann S."/>
            <person name="Jevons A."/>
            <person name="De Rycker M."/>
            <person name="Casamassima A."/>
            <person name="Radtke S."/>
            <person name="Collazos A."/>
            <person name="Parker P.J."/>
        </authorList>
    </citation>
    <scope>FUNCTION IN CELL MIGRATION</scope>
    <scope>TISSUE SPECIFICITY</scope>
</reference>
<reference key="33">
    <citation type="journal article" date="2011" name="Sci. Signal.">
        <title>System-wide temporal characterization of the proteome and phosphoproteome of human embryonic stem cell differentiation.</title>
        <authorList>
            <person name="Rigbolt K.T."/>
            <person name="Prokhorova T.A."/>
            <person name="Akimov V."/>
            <person name="Henningsen J."/>
            <person name="Johansen P.T."/>
            <person name="Kratchmarova I."/>
            <person name="Kassem M."/>
            <person name="Mann M."/>
            <person name="Olsen J.V."/>
            <person name="Blagoev B."/>
        </authorList>
    </citation>
    <scope>PHOSPHORYLATION [LARGE SCALE ANALYSIS] AT SER-562</scope>
    <scope>IDENTIFICATION BY MASS SPECTROMETRY [LARGE SCALE ANALYSIS]</scope>
</reference>
<reference key="34">
    <citation type="journal article" date="2012" name="Proc. Natl. Acad. Sci. U.S.A.">
        <title>N-terminal acetylome analyses and functional insights of the N-terminal acetyltransferase NatB.</title>
        <authorList>
            <person name="Van Damme P."/>
            <person name="Lasa M."/>
            <person name="Polevoda B."/>
            <person name="Gazquez C."/>
            <person name="Elosegui-Artola A."/>
            <person name="Kim D.S."/>
            <person name="De Juan-Pardo E."/>
            <person name="Demeyer K."/>
            <person name="Hole K."/>
            <person name="Larrea E."/>
            <person name="Timmerman E."/>
            <person name="Prieto J."/>
            <person name="Arnesen T."/>
            <person name="Sherman F."/>
            <person name="Gevaert K."/>
            <person name="Aldabe R."/>
        </authorList>
    </citation>
    <scope>ACETYLATION [LARGE SCALE ANALYSIS] AT ALA-2</scope>
    <scope>CLEAVAGE OF INITIATOR METHIONINE [LARGE SCALE ANALYSIS]</scope>
    <scope>IDENTIFICATION BY MASS SPECTROMETRY [LARGE SCALE ANALYSIS]</scope>
</reference>
<reference key="35">
    <citation type="journal article" date="2013" name="J. Proteome Res.">
        <title>Toward a comprehensive characterization of a human cancer cell phosphoproteome.</title>
        <authorList>
            <person name="Zhou H."/>
            <person name="Di Palma S."/>
            <person name="Preisinger C."/>
            <person name="Peng M."/>
            <person name="Polat A.N."/>
            <person name="Heck A.J."/>
            <person name="Mohammed S."/>
        </authorList>
    </citation>
    <scope>PHOSPHORYLATION [LARGE SCALE ANALYSIS] AT SER-69; SER-533; SER-537; SER-540; SER-562; SER-608 AND SER-916</scope>
    <scope>IDENTIFICATION BY MASS SPECTROMETRY [LARGE SCALE ANALYSIS]</scope>
    <source>
        <tissue>Cervix carcinoma</tissue>
        <tissue>Erythroleukemia</tissue>
    </source>
</reference>
<reference key="36">
    <citation type="journal article" date="2014" name="J. Proteomics">
        <title>An enzyme assisted RP-RPLC approach for in-depth analysis of human liver phosphoproteome.</title>
        <authorList>
            <person name="Bian Y."/>
            <person name="Song C."/>
            <person name="Cheng K."/>
            <person name="Dong M."/>
            <person name="Wang F."/>
            <person name="Huang J."/>
            <person name="Sun D."/>
            <person name="Wang L."/>
            <person name="Ye M."/>
            <person name="Zou H."/>
        </authorList>
    </citation>
    <scope>PHOSPHORYLATION [LARGE SCALE ANALYSIS] AT SER-916</scope>
    <scope>IDENTIFICATION BY MASS SPECTROMETRY [LARGE SCALE ANALYSIS]</scope>
    <source>
        <tissue>Liver</tissue>
    </source>
</reference>
<reference key="37">
    <citation type="journal article" date="1999" name="Mol. Cell">
        <title>The structural basis of Rho effector recognition revealed by the crystal structure of human RhoA complexed with the effector domain of PKN/PRK1.</title>
        <authorList>
            <person name="Maesaki R."/>
            <person name="Ihara K."/>
            <person name="Shimizu T."/>
            <person name="Kuroda S."/>
            <person name="Kaibuchi K."/>
            <person name="Hakoshima T."/>
        </authorList>
    </citation>
    <scope>X-RAY CRYSTALLOGRAPHY (2.2 ANGSTROMS) OF 13-98 IN COMPLEX WITH RHOA</scope>
</reference>
<reference key="38">
    <citation type="journal article" date="1999" name="J. Struct. Biol.">
        <title>Biochemical and crystallographic characterization of a Rho effector domain of the protein serine/threonine kinase N in a complex with RhoA.</title>
        <authorList>
            <person name="Maesaki R."/>
            <person name="Shimizu T."/>
            <person name="Ihara K."/>
            <person name="Kuroda S."/>
            <person name="Kaibuchi K."/>
            <person name="Hakoshima T."/>
        </authorList>
    </citation>
    <scope>X-RAY CRYSTALLOGRAPHY (2.2 ANGSTROMS) OF 13-98</scope>
</reference>
<reference key="39">
    <citation type="journal article" date="2003" name="J. Biol. Chem.">
        <title>Molecular dissection of the interaction between the small G proteins Rac1 and RhoA and protein kinase C-related kinase 1 (PRK1).</title>
        <authorList>
            <person name="Owen D."/>
            <person name="Lowe P.N."/>
            <person name="Nietlispach D."/>
            <person name="Brosnan C.E."/>
            <person name="Chirgadze D.Y."/>
            <person name="Parker P.J."/>
            <person name="Blundell T.L."/>
            <person name="Mott H.R."/>
        </authorList>
    </citation>
    <scope>STRUCTURE BY NMR OF 116-199 IN COMPLEX WITH RAC1</scope>
</reference>
<reference key="40">
    <citation type="journal article" date="2008" name="J. Biol. Chem.">
        <title>The Rac1 polybasic region is required for interaction with its effector PRK1.</title>
        <authorList>
            <person name="Modha R."/>
            <person name="Campbell L.J."/>
            <person name="Nietlispach D."/>
            <person name="Buhecha H.R."/>
            <person name="Owen D."/>
            <person name="Mott H.R."/>
        </authorList>
    </citation>
    <scope>STRUCTURE BY NMR OF 122-199 IN COMPLEX WITH RAC1</scope>
</reference>
<reference key="41">
    <citation type="journal article" date="2014" name="Mol. Cell. Biol.">
        <title>Structure of an SspH1-PKN1 complex reveals the basis for host substrate recognition and mechanism of activation for a bacterial E3 ubiquitin ligase.</title>
        <authorList>
            <person name="Keszei A.F."/>
            <person name="Tang X."/>
            <person name="McCormick C."/>
            <person name="Zeqiraj E."/>
            <person name="Rohde J.R."/>
            <person name="Tyers M."/>
            <person name="Sicheri F."/>
        </authorList>
    </citation>
    <scope>X-RAY CRYSTALLOGRAPHY (2.90 ANGSTROMS) OF 122-199 IN COMPLEX WITH SALMONELLA SSPH1</scope>
    <scope>UBIQUITINATION (MICROBIAL INFECTION)</scope>
    <scope>MUTAGENESIS OF ARG-181 AND ARG-185</scope>
    <scope>FUNCTION AS ANDROGEN RECEPTOR COACTIVATOR</scope>
    <scope>INTERACTION WITH SALMONELLA SSPH1 (MICROBIAL INFECTION)</scope>
</reference>
<reference key="42">
    <citation type="journal article" date="2007" name="Nature">
        <title>Patterns of somatic mutation in human cancer genomes.</title>
        <authorList>
            <person name="Greenman C."/>
            <person name="Stephens P."/>
            <person name="Smith R."/>
            <person name="Dalgliesh G.L."/>
            <person name="Hunter C."/>
            <person name="Bignell G."/>
            <person name="Davies H."/>
            <person name="Teague J."/>
            <person name="Butler A."/>
            <person name="Stevens C."/>
            <person name="Edkins S."/>
            <person name="O'Meara S."/>
            <person name="Vastrik I."/>
            <person name="Schmidt E.E."/>
            <person name="Avis T."/>
            <person name="Barthorpe S."/>
            <person name="Bhamra G."/>
            <person name="Buck G."/>
            <person name="Choudhury B."/>
            <person name="Clements J."/>
            <person name="Cole J."/>
            <person name="Dicks E."/>
            <person name="Forbes S."/>
            <person name="Gray K."/>
            <person name="Halliday K."/>
            <person name="Harrison R."/>
            <person name="Hills K."/>
            <person name="Hinton J."/>
            <person name="Jenkinson A."/>
            <person name="Jones D."/>
            <person name="Menzies A."/>
            <person name="Mironenko T."/>
            <person name="Perry J."/>
            <person name="Raine K."/>
            <person name="Richardson D."/>
            <person name="Shepherd R."/>
            <person name="Small A."/>
            <person name="Tofts C."/>
            <person name="Varian J."/>
            <person name="Webb T."/>
            <person name="West S."/>
            <person name="Widaa S."/>
            <person name="Yates A."/>
            <person name="Cahill D.P."/>
            <person name="Louis D.N."/>
            <person name="Goldstraw P."/>
            <person name="Nicholson A.G."/>
            <person name="Brasseur F."/>
            <person name="Looijenga L."/>
            <person name="Weber B.L."/>
            <person name="Chiew Y.-E."/>
            <person name="DeFazio A."/>
            <person name="Greaves M.F."/>
            <person name="Green A.R."/>
            <person name="Campbell P."/>
            <person name="Birney E."/>
            <person name="Easton D.F."/>
            <person name="Chenevix-Trench G."/>
            <person name="Tan M.-H."/>
            <person name="Khoo S.K."/>
            <person name="Teh B.T."/>
            <person name="Yuen S.T."/>
            <person name="Leung S.Y."/>
            <person name="Wooster R."/>
            <person name="Futreal P.A."/>
            <person name="Stratton M.R."/>
        </authorList>
    </citation>
    <scope>VARIANTS [LARGE SCALE ANALYSIS] CYS-185; GLU-197; TRP-436; GLN-520; ILE-555; GLN-635; VAL-718; LEU-873; ILE-901 AND VAL-921</scope>
</reference>
<evidence type="ECO:0000250" key="1"/>
<evidence type="ECO:0000250" key="2">
    <source>
        <dbReference type="UniProtKB" id="P70268"/>
    </source>
</evidence>
<evidence type="ECO:0000250" key="3">
    <source>
        <dbReference type="UniProtKB" id="Q63433"/>
    </source>
</evidence>
<evidence type="ECO:0000255" key="4">
    <source>
        <dbReference type="PROSITE-ProRule" id="PRU00041"/>
    </source>
</evidence>
<evidence type="ECO:0000255" key="5">
    <source>
        <dbReference type="PROSITE-ProRule" id="PRU00159"/>
    </source>
</evidence>
<evidence type="ECO:0000255" key="6">
    <source>
        <dbReference type="PROSITE-ProRule" id="PRU00618"/>
    </source>
</evidence>
<evidence type="ECO:0000255" key="7">
    <source>
        <dbReference type="PROSITE-ProRule" id="PRU01207"/>
    </source>
</evidence>
<evidence type="ECO:0000255" key="8">
    <source>
        <dbReference type="PROSITE-ProRule" id="PRU10027"/>
    </source>
</evidence>
<evidence type="ECO:0000256" key="9">
    <source>
        <dbReference type="SAM" id="MobiDB-lite"/>
    </source>
</evidence>
<evidence type="ECO:0000269" key="10">
    <source>
    </source>
</evidence>
<evidence type="ECO:0000269" key="11">
    <source>
    </source>
</evidence>
<evidence type="ECO:0000269" key="12">
    <source>
    </source>
</evidence>
<evidence type="ECO:0000269" key="13">
    <source>
    </source>
</evidence>
<evidence type="ECO:0000269" key="14">
    <source>
    </source>
</evidence>
<evidence type="ECO:0000269" key="15">
    <source>
    </source>
</evidence>
<evidence type="ECO:0000269" key="16">
    <source>
    </source>
</evidence>
<evidence type="ECO:0000269" key="17">
    <source>
    </source>
</evidence>
<evidence type="ECO:0000269" key="18">
    <source>
    </source>
</evidence>
<evidence type="ECO:0000269" key="19">
    <source>
    </source>
</evidence>
<evidence type="ECO:0000269" key="20">
    <source>
    </source>
</evidence>
<evidence type="ECO:0000269" key="21">
    <source>
    </source>
</evidence>
<evidence type="ECO:0000269" key="22">
    <source>
    </source>
</evidence>
<evidence type="ECO:0000269" key="23">
    <source>
    </source>
</evidence>
<evidence type="ECO:0000269" key="24">
    <source>
    </source>
</evidence>
<evidence type="ECO:0000269" key="25">
    <source>
    </source>
</evidence>
<evidence type="ECO:0000269" key="26">
    <source>
    </source>
</evidence>
<evidence type="ECO:0000269" key="27">
    <source>
    </source>
</evidence>
<evidence type="ECO:0000269" key="28">
    <source>
    </source>
</evidence>
<evidence type="ECO:0000269" key="29">
    <source>
    </source>
</evidence>
<evidence type="ECO:0000269" key="30">
    <source>
    </source>
</evidence>
<evidence type="ECO:0000269" key="31">
    <source>
    </source>
</evidence>
<evidence type="ECO:0000269" key="32">
    <source>
    </source>
</evidence>
<evidence type="ECO:0000269" key="33">
    <source>
    </source>
</evidence>
<evidence type="ECO:0000269" key="34">
    <source>
    </source>
</evidence>
<evidence type="ECO:0000269" key="35">
    <source>
    </source>
</evidence>
<evidence type="ECO:0000303" key="36">
    <source>
    </source>
</evidence>
<evidence type="ECO:0000303" key="37">
    <source>
    </source>
</evidence>
<evidence type="ECO:0000305" key="38"/>
<evidence type="ECO:0007744" key="39">
    <source>
    </source>
</evidence>
<evidence type="ECO:0007744" key="40">
    <source>
    </source>
</evidence>
<evidence type="ECO:0007744" key="41">
    <source>
    </source>
</evidence>
<evidence type="ECO:0007744" key="42">
    <source>
    </source>
</evidence>
<evidence type="ECO:0007744" key="43">
    <source>
    </source>
</evidence>
<evidence type="ECO:0007744" key="44">
    <source>
    </source>
</evidence>
<evidence type="ECO:0007744" key="45">
    <source>
    </source>
</evidence>
<evidence type="ECO:0007744" key="46">
    <source>
    </source>
</evidence>
<evidence type="ECO:0007744" key="47">
    <source>
    </source>
</evidence>
<evidence type="ECO:0007744" key="48">
    <source>
    </source>
</evidence>
<evidence type="ECO:0007744" key="49">
    <source>
    </source>
</evidence>
<evidence type="ECO:0007744" key="50">
    <source>
    </source>
</evidence>
<evidence type="ECO:0007829" key="51">
    <source>
        <dbReference type="PDB" id="1CXZ"/>
    </source>
</evidence>
<evidence type="ECO:0007829" key="52">
    <source>
        <dbReference type="PDB" id="1URF"/>
    </source>
</evidence>
<evidence type="ECO:0007829" key="53">
    <source>
        <dbReference type="PDB" id="2RMK"/>
    </source>
</evidence>
<evidence type="ECO:0007829" key="54">
    <source>
        <dbReference type="PDB" id="4NKG"/>
    </source>
</evidence>
<evidence type="ECO:0007829" key="55">
    <source>
        <dbReference type="PDB" id="4OTD"/>
    </source>
</evidence>
<evidence type="ECO:0007829" key="56">
    <source>
        <dbReference type="PDB" id="4OTG"/>
    </source>
</evidence>
<evidence type="ECO:0007829" key="57">
    <source>
        <dbReference type="PDB" id="4OTH"/>
    </source>
</evidence>
<comment type="function">
    <text evidence="12 13 19 22 23 25 26 27 30 32 33">PKC-related serine/threonine-protein kinase involved in various processes such as regulation of the intermediate filaments of the actin cytoskeleton, cell migration, tumor cell invasion and transcription regulation. Part of a signaling cascade that begins with the activation of the adrenergic receptor ADRA1B and leads to the activation of MAPK14. Regulates the cytoskeletal network by phosphorylating proteins such as VIM and neurofilament proteins NEFH, NEFL and NEFM, leading to inhibit their polymerization. Phosphorylates 'Ser-575', 'Ser-637' and 'Ser-669' of MAPT/Tau, lowering its ability to bind to microtubules, resulting in disruption of tubulin assembly. Acts as a key coactivator of androgen receptor (AR)-dependent transcription, by being recruited to AR target genes and specifically mediating phosphorylation of 'Thr-11' of histone H3 (H3T11ph), a specific tag for epigenetic transcriptional activation that promotes demethylation of histone H3 'Lys-9' (H3K9me) by KDM4C/JMJD2C. Phosphorylates HDAC5, HDAC7 and HDAC9, leading to impair their import in the nucleus. Phosphorylates 'Thr-38' of PPP1R14A, 'Ser-159', 'Ser-163' and 'Ser-170' of MARCKS, and GFAP. Able to phosphorylate RPS6 in vitro.</text>
</comment>
<comment type="catalytic activity">
    <reaction evidence="22">
        <text>L-seryl-[protein] + ATP = O-phospho-L-seryl-[protein] + ADP + H(+)</text>
        <dbReference type="Rhea" id="RHEA:17989"/>
        <dbReference type="Rhea" id="RHEA-COMP:9863"/>
        <dbReference type="Rhea" id="RHEA-COMP:11604"/>
        <dbReference type="ChEBI" id="CHEBI:15378"/>
        <dbReference type="ChEBI" id="CHEBI:29999"/>
        <dbReference type="ChEBI" id="CHEBI:30616"/>
        <dbReference type="ChEBI" id="CHEBI:83421"/>
        <dbReference type="ChEBI" id="CHEBI:456216"/>
        <dbReference type="EC" id="2.7.11.13"/>
    </reaction>
</comment>
<comment type="catalytic activity">
    <reaction evidence="22">
        <text>L-threonyl-[protein] + ATP = O-phospho-L-threonyl-[protein] + ADP + H(+)</text>
        <dbReference type="Rhea" id="RHEA:46608"/>
        <dbReference type="Rhea" id="RHEA-COMP:11060"/>
        <dbReference type="Rhea" id="RHEA-COMP:11605"/>
        <dbReference type="ChEBI" id="CHEBI:15378"/>
        <dbReference type="ChEBI" id="CHEBI:30013"/>
        <dbReference type="ChEBI" id="CHEBI:30616"/>
        <dbReference type="ChEBI" id="CHEBI:61977"/>
        <dbReference type="ChEBI" id="CHEBI:456216"/>
        <dbReference type="EC" id="2.7.11.13"/>
    </reaction>
</comment>
<comment type="activity regulation">
    <text evidence="31 35">Kinase activity is activated upon binding to Rho proteins (RHOA, RHOB and RAC1). Activated by lipids, particularly cardiolipin and to a lesser extent by other acidic phospholipids. Activated by caspase-3 (CASP3) cleavage during apoptosis. Two specific sites, Thr-774 (activation loop of the kinase domain) and Ser-916 (turn motif), need to be phosphorylated for its full activation.</text>
</comment>
<comment type="biophysicochemical properties">
    <kinetics>
        <KM evidence="23">20.6 uM for HDAC5</KM>
    </kinetics>
</comment>
<comment type="subunit">
    <text evidence="2 10 11 13 14 17 21 24 25 31 34">Interacts with ZFAND6 (By similarity). Interacts with AR (PubMed:12514133). Interacts with PRKCB (PubMed:20228790). Interacts (via REM 1 and REM 2 repeats) with RAC1 (PubMed:14514689, PubMed:18006505). Interacts (via REM 1 repeat) with RHOA (PubMed:10619026, PubMed:8571126). Interacts with RHOB (PubMed:9478917). Interacts (via C-terminus) with PDPK1 (PubMed:10792047). Interacts with CCNT2; enhances MYOD1-dependent transcription (PubMed:16331689). Component of a signaling complex containing at least AKAP13, PKN1, MAPK14, ZAK and MAP2K3. Within this complex, AKAP13 interacts directly with PKN1, which in turn recruits MAPK14, MAP2K3 and ZAK (PubMed:21224381).</text>
</comment>
<comment type="subunit">
    <text evidence="18 27">(Microbial infection) Interacts (via the second REM repeat) with S.typhimurium E3 ubiquitin-protein ligase SspH1 (via the leucine-rich repeat region) (PubMed:16611232, PubMed:24248594).</text>
</comment>
<comment type="interaction">
    <interactant intactId="EBI-602382">
        <id>Q16512</id>
    </interactant>
    <interactant intactId="EBI-10173507">
        <id>Q6UY14-3</id>
        <label>ADAMTSL4</label>
    </interactant>
    <organismsDiffer>false</organismsDiffer>
    <experiments>3</experiments>
</comment>
<comment type="interaction">
    <interactant intactId="EBI-602382">
        <id>Q16512</id>
    </interactant>
    <interactant intactId="EBI-357530">
        <id>Q9ULX6</id>
        <label>AKAP8L</label>
    </interactant>
    <organismsDiffer>false</organismsDiffer>
    <experiments>3</experiments>
</comment>
<comment type="interaction">
    <interactant intactId="EBI-602382">
        <id>Q16512</id>
    </interactant>
    <interactant intactId="EBI-11745576">
        <id>Q6PJH3</id>
        <label>AKAP9</label>
    </interactant>
    <organismsDiffer>false</organismsDiffer>
    <experiments>3</experiments>
</comment>
<comment type="interaction">
    <interactant intactId="EBI-602382">
        <id>Q16512</id>
    </interactant>
    <interactant intactId="EBI-77613">
        <id>P05067</id>
        <label>APP</label>
    </interactant>
    <organismsDiffer>false</organismsDiffer>
    <experiments>3</experiments>
</comment>
<comment type="interaction">
    <interactant intactId="EBI-602382">
        <id>Q16512</id>
    </interactant>
    <interactant intactId="EBI-2117357">
        <id>P15289</id>
        <label>ARSA</label>
    </interactant>
    <organismsDiffer>false</organismsDiffer>
    <experiments>3</experiments>
</comment>
<comment type="interaction">
    <interactant intactId="EBI-602382">
        <id>Q16512</id>
    </interactant>
    <interactant intactId="EBI-949378">
        <id>Q14457</id>
        <label>BECN1</label>
    </interactant>
    <organismsDiffer>false</organismsDiffer>
    <experiments>3</experiments>
</comment>
<comment type="interaction">
    <interactant intactId="EBI-602382">
        <id>Q16512</id>
    </interactant>
    <interactant intactId="EBI-2548012">
        <id>Q9H2G9</id>
        <label>BLZF1</label>
    </interactant>
    <organismsDiffer>false</organismsDiffer>
    <experiments>3</experiments>
</comment>
<comment type="interaction">
    <interactant intactId="EBI-602382">
        <id>Q16512</id>
    </interactant>
    <interactant intactId="EBI-12904676">
        <id>Q8WU43</id>
        <label>C2orf15</label>
    </interactant>
    <organismsDiffer>false</organismsDiffer>
    <experiments>3</experiments>
</comment>
<comment type="interaction">
    <interactant intactId="EBI-602382">
        <id>Q16512</id>
    </interactant>
    <interactant intactId="EBI-10261970">
        <id>Q8IW40</id>
        <label>CCDC103</label>
    </interactant>
    <organismsDiffer>false</organismsDiffer>
    <experiments>3</experiments>
</comment>
<comment type="interaction">
    <interactant intactId="EBI-602382">
        <id>Q16512</id>
    </interactant>
    <interactant intactId="EBI-10972887">
        <id>Q96M89-2</id>
        <label>CCDC138</label>
    </interactant>
    <organismsDiffer>false</organismsDiffer>
    <experiments>3</experiments>
</comment>
<comment type="interaction">
    <interactant intactId="EBI-602382">
        <id>Q16512</id>
    </interactant>
    <interactant intactId="EBI-739674">
        <id>Q15834</id>
        <label>CCDC85B</label>
    </interactant>
    <organismsDiffer>false</organismsDiffer>
    <experiments>2</experiments>
</comment>
<comment type="interaction">
    <interactant intactId="EBI-602382">
        <id>Q16512</id>
    </interactant>
    <interactant intactId="EBI-21668062">
        <id>Q8IV13</id>
        <label>CCNJL</label>
    </interactant>
    <organismsDiffer>false</organismsDiffer>
    <experiments>3</experiments>
</comment>
<comment type="interaction">
    <interactant intactId="EBI-602382">
        <id>Q16512</id>
    </interactant>
    <interactant intactId="EBI-1181367">
        <id>Q01850</id>
        <label>CDR2</label>
    </interactant>
    <organismsDiffer>false</organismsDiffer>
    <experiments>6</experiments>
</comment>
<comment type="interaction">
    <interactant intactId="EBI-602382">
        <id>Q16512</id>
    </interactant>
    <interactant intactId="EBI-11752486">
        <id>Q86XR8-3</id>
        <label>CEP57</label>
    </interactant>
    <organismsDiffer>false</organismsDiffer>
    <experiments>3</experiments>
</comment>
<comment type="interaction">
    <interactant intactId="EBI-602382">
        <id>Q16512</id>
    </interactant>
    <interactant intactId="EBI-10181988">
        <id>Q8IYX8-2</id>
        <label>CEP57L1</label>
    </interactant>
    <organismsDiffer>false</organismsDiffer>
    <experiments>3</experiments>
</comment>
<comment type="interaction">
    <interactant intactId="EBI-602382">
        <id>Q16512</id>
    </interactant>
    <interactant intactId="EBI-739624">
        <id>Q8NHQ1</id>
        <label>CEP70</label>
    </interactant>
    <organismsDiffer>false</organismsDiffer>
    <experiments>3</experiments>
</comment>
<comment type="interaction">
    <interactant intactId="EBI-602382">
        <id>Q16512</id>
    </interactant>
    <interactant intactId="EBI-3867333">
        <id>A8MQ03</id>
        <label>CYSRT1</label>
    </interactant>
    <organismsDiffer>false</organismsDiffer>
    <experiments>3</experiments>
</comment>
<comment type="interaction">
    <interactant intactId="EBI-602382">
        <id>Q16512</id>
    </interactant>
    <interactant intactId="EBI-11988027">
        <id>Q9NRI5-2</id>
        <label>DISC1</label>
    </interactant>
    <organismsDiffer>false</organismsDiffer>
    <experiments>3</experiments>
</comment>
<comment type="interaction">
    <interactant intactId="EBI-602382">
        <id>Q16512</id>
    </interactant>
    <interactant intactId="EBI-740680">
        <id>Q8WWB3</id>
        <label>DYDC1</label>
    </interactant>
    <organismsDiffer>false</organismsDiffer>
    <experiments>3</experiments>
</comment>
<comment type="interaction">
    <interactant intactId="EBI-602382">
        <id>Q16512</id>
    </interactant>
    <interactant intactId="EBI-351467">
        <id>P26641</id>
        <label>EEF1G</label>
    </interactant>
    <organismsDiffer>false</organismsDiffer>
    <experiments>3</experiments>
</comment>
<comment type="interaction">
    <interactant intactId="EBI-602382">
        <id>Q16512</id>
    </interactant>
    <interactant intactId="EBI-711990">
        <id>O00303</id>
        <label>EIF3F</label>
    </interactant>
    <organismsDiffer>false</organismsDiffer>
    <experiments>3</experiments>
</comment>
<comment type="interaction">
    <interactant intactId="EBI-602382">
        <id>Q16512</id>
    </interactant>
    <interactant intactId="EBI-618189">
        <id>Q06547-2</id>
        <label>GABPB1</label>
    </interactant>
    <organismsDiffer>false</organismsDiffer>
    <experiments>3</experiments>
</comment>
<comment type="interaction">
    <interactant intactId="EBI-602382">
        <id>Q16512</id>
    </interactant>
    <interactant intactId="EBI-618309">
        <id>Q08379</id>
        <label>GOLGA2</label>
    </interactant>
    <organismsDiffer>false</organismsDiffer>
    <experiments>6</experiments>
</comment>
<comment type="interaction">
    <interactant intactId="EBI-602382">
        <id>Q16512</id>
    </interactant>
    <interactant intactId="EBI-5916454">
        <id>A6NEM1</id>
        <label>GOLGA6L9</label>
    </interactant>
    <organismsDiffer>false</organismsDiffer>
    <experiments>3</experiments>
</comment>
<comment type="interaction">
    <interactant intactId="EBI-602382">
        <id>Q16512</id>
    </interactant>
    <interactant intactId="EBI-712814">
        <id>P54257</id>
        <label>HAP1</label>
    </interactant>
    <organismsDiffer>false</organismsDiffer>
    <experiments>3</experiments>
</comment>
<comment type="interaction">
    <interactant intactId="EBI-602382">
        <id>Q16512</id>
    </interactant>
    <interactant intactId="EBI-2514791">
        <id>Q96CS2</id>
        <label>HAUS1</label>
    </interactant>
    <organismsDiffer>false</organismsDiffer>
    <experiments>3</experiments>
</comment>
<comment type="interaction">
    <interactant intactId="EBI-602382">
        <id>Q16512</id>
    </interactant>
    <interactant intactId="EBI-748420">
        <id>Q9NSC5</id>
        <label>HOMER3</label>
    </interactant>
    <organismsDiffer>false</organismsDiffer>
    <experiments>7</experiments>
</comment>
<comment type="interaction">
    <interactant intactId="EBI-602382">
        <id>Q16512</id>
    </interactant>
    <interactant intactId="EBI-7116203">
        <id>O75031</id>
        <label>HSF2BP</label>
    </interactant>
    <organismsDiffer>false</organismsDiffer>
    <experiments>3</experiments>
</comment>
<comment type="interaction">
    <interactant intactId="EBI-602382">
        <id>Q16512</id>
    </interactant>
    <interactant intactId="EBI-747204">
        <id>Q9UKT9</id>
        <label>IKZF3</label>
    </interactant>
    <organismsDiffer>false</organismsDiffer>
    <experiments>3</experiments>
</comment>
<comment type="interaction">
    <interactant intactId="EBI-602382">
        <id>Q16512</id>
    </interactant>
    <interactant intactId="EBI-748258">
        <id>Q5TA45</id>
        <label>INTS11</label>
    </interactant>
    <organismsDiffer>false</organismsDiffer>
    <experiments>3</experiments>
</comment>
<comment type="interaction">
    <interactant intactId="EBI-602382">
        <id>Q16512</id>
    </interactant>
    <interactant intactId="EBI-743960">
        <id>Q8N5Z5</id>
        <label>KCTD17</label>
    </interactant>
    <organismsDiffer>false</organismsDiffer>
    <experiments>3</experiments>
</comment>
<comment type="interaction">
    <interactant intactId="EBI-602382">
        <id>Q16512</id>
    </interactant>
    <interactant intactId="EBI-3437878">
        <id>Q86T90</id>
        <label>KIAA1328</label>
    </interactant>
    <organismsDiffer>false</organismsDiffer>
    <experiments>3</experiments>
</comment>
<comment type="interaction">
    <interactant intactId="EBI-602382">
        <id>Q16512</id>
    </interactant>
    <interactant intactId="EBI-739566">
        <id>P19012</id>
        <label>KRT15</label>
    </interactant>
    <organismsDiffer>false</organismsDiffer>
    <experiments>3</experiments>
</comment>
<comment type="interaction">
    <interactant intactId="EBI-602382">
        <id>Q16512</id>
    </interactant>
    <interactant intactId="EBI-356410">
        <id>P08779</id>
        <label>KRT16</label>
    </interactant>
    <organismsDiffer>false</organismsDiffer>
    <experiments>3</experiments>
</comment>
<comment type="interaction">
    <interactant intactId="EBI-602382">
        <id>Q16512</id>
    </interactant>
    <interactant intactId="EBI-742756">
        <id>P08727</id>
        <label>KRT19</label>
    </interactant>
    <organismsDiffer>false</organismsDiffer>
    <experiments>3</experiments>
</comment>
<comment type="interaction">
    <interactant intactId="EBI-602382">
        <id>Q16512</id>
    </interactant>
    <interactant intactId="EBI-948001">
        <id>Q15323</id>
        <label>KRT31</label>
    </interactant>
    <organismsDiffer>false</organismsDiffer>
    <experiments>6</experiments>
</comment>
<comment type="interaction">
    <interactant intactId="EBI-602382">
        <id>Q16512</id>
    </interactant>
    <interactant intactId="EBI-1047093">
        <id>O76011</id>
        <label>KRT34</label>
    </interactant>
    <organismsDiffer>false</organismsDiffer>
    <experiments>5</experiments>
</comment>
<comment type="interaction">
    <interactant intactId="EBI-602382">
        <id>Q16512</id>
    </interactant>
    <interactant intactId="EBI-1058674">
        <id>Q92764</id>
        <label>KRT35</label>
    </interactant>
    <organismsDiffer>false</organismsDiffer>
    <experiments>3</experiments>
</comment>
<comment type="interaction">
    <interactant intactId="EBI-602382">
        <id>Q16512</id>
    </interactant>
    <interactant intactId="EBI-11958506">
        <id>O76013-2</id>
        <label>KRT36</label>
    </interactant>
    <organismsDiffer>false</organismsDiffer>
    <experiments>3</experiments>
</comment>
<comment type="interaction">
    <interactant intactId="EBI-602382">
        <id>Q16512</id>
    </interactant>
    <interactant intactId="EBI-1045716">
        <id>O76014</id>
        <label>KRT37</label>
    </interactant>
    <organismsDiffer>false</organismsDiffer>
    <experiments>3</experiments>
</comment>
<comment type="interaction">
    <interactant intactId="EBI-602382">
        <id>Q16512</id>
    </interactant>
    <interactant intactId="EBI-2350424">
        <id>Q9BV99</id>
        <label>LRRC61</label>
    </interactant>
    <organismsDiffer>false</organismsDiffer>
    <experiments>3</experiments>
</comment>
<comment type="interaction">
    <interactant intactId="EBI-602382">
        <id>Q16512</id>
    </interactant>
    <interactant intactId="EBI-687346">
        <id>Q9NYL2-1</id>
        <label>MAP3K20</label>
    </interactant>
    <organismsDiffer>false</organismsDiffer>
    <experiments>2</experiments>
</comment>
<comment type="interaction">
    <interactant intactId="EBI-602382">
        <id>Q16512</id>
    </interactant>
    <interactant intactId="EBI-602406">
        <id>P53778</id>
        <label>MAPK12</label>
    </interactant>
    <organismsDiffer>false</organismsDiffer>
    <experiments>2</experiments>
</comment>
<comment type="interaction">
    <interactant intactId="EBI-602382">
        <id>Q16512</id>
    </interactant>
    <interactant intactId="EBI-2340316">
        <id>O15344</id>
        <label>MID1</label>
    </interactant>
    <organismsDiffer>false</organismsDiffer>
    <experiments>3</experiments>
</comment>
<comment type="interaction">
    <interactant intactId="EBI-602382">
        <id>Q16512</id>
    </interactant>
    <interactant intactId="EBI-10172526">
        <id>Q9UJV3-2</id>
        <label>MID2</label>
    </interactant>
    <organismsDiffer>false</organismsDiffer>
    <experiments>3</experiments>
</comment>
<comment type="interaction">
    <interactant intactId="EBI-602382">
        <id>Q16512</id>
    </interactant>
    <interactant intactId="EBI-25830642">
        <id>Q8N108-16</id>
        <label>MIER1</label>
    </interactant>
    <organismsDiffer>false</organismsDiffer>
    <experiments>3</experiments>
</comment>
<comment type="interaction">
    <interactant intactId="EBI-602382">
        <id>Q16512</id>
    </interactant>
    <interactant intactId="EBI-2548751">
        <id>Q8TD10</id>
        <label>MIPOL1</label>
    </interactant>
    <organismsDiffer>false</organismsDiffer>
    <experiments>3</experiments>
</comment>
<comment type="interaction">
    <interactant intactId="EBI-602382">
        <id>Q16512</id>
    </interactant>
    <interactant intactId="EBI-2340269">
        <id>Q13064</id>
        <label>MKRN3</label>
    </interactant>
    <organismsDiffer>false</organismsDiffer>
    <experiments>3</experiments>
</comment>
<comment type="interaction">
    <interactant intactId="EBI-602382">
        <id>Q16512</id>
    </interactant>
    <interactant intactId="EBI-11522433">
        <id>Q5JR59-3</id>
        <label>MTUS2</label>
    </interactant>
    <organismsDiffer>false</organismsDiffer>
    <experiments>3</experiments>
</comment>
<comment type="interaction">
    <interactant intactId="EBI-602382">
        <id>Q16512</id>
    </interactant>
    <interactant intactId="EBI-475646">
        <id>P07196</id>
        <label>NEFL</label>
    </interactant>
    <organismsDiffer>false</organismsDiffer>
    <experiments>3</experiments>
</comment>
<comment type="interaction">
    <interactant intactId="EBI-602382">
        <id>Q16512</id>
    </interactant>
    <interactant intactId="EBI-79165">
        <id>Q9NRD5</id>
        <label>PICK1</label>
    </interactant>
    <organismsDiffer>false</organismsDiffer>
    <experiments>3</experiments>
</comment>
<comment type="interaction">
    <interactant intactId="EBI-602382">
        <id>Q16512</id>
    </interactant>
    <interactant intactId="EBI-302345">
        <id>Q8ND90</id>
        <label>PNMA1</label>
    </interactant>
    <organismsDiffer>false</organismsDiffer>
    <experiments>3</experiments>
</comment>
<comment type="interaction">
    <interactant intactId="EBI-602382">
        <id>Q16512</id>
    </interactant>
    <interactant intactId="EBI-12029004">
        <id>P78424</id>
        <label>POU6F2</label>
    </interactant>
    <organismsDiffer>false</organismsDiffer>
    <experiments>3</experiments>
</comment>
<comment type="interaction">
    <interactant intactId="EBI-602382">
        <id>Q16512</id>
    </interactant>
    <interactant intactId="EBI-603350">
        <id>P28070</id>
        <label>PSMB4</label>
    </interactant>
    <organismsDiffer>false</organismsDiffer>
    <experiments>3</experiments>
</comment>
<comment type="interaction">
    <interactant intactId="EBI-602382">
        <id>Q16512</id>
    </interactant>
    <interactant intactId="EBI-11984839">
        <id>Q96QF0-7</id>
        <label>RAB3IP</label>
    </interactant>
    <organismsDiffer>false</organismsDiffer>
    <experiments>3</experiments>
</comment>
<comment type="interaction">
    <interactant intactId="EBI-602382">
        <id>Q16512</id>
    </interactant>
    <interactant intactId="EBI-748621">
        <id>Q9UJW9</id>
        <label>SERTAD3</label>
    </interactant>
    <organismsDiffer>false</organismsDiffer>
    <experiments>3</experiments>
</comment>
<comment type="interaction">
    <interactant intactId="EBI-602382">
        <id>Q16512</id>
    </interactant>
    <interactant intactId="EBI-347919">
        <id>Q9H7B4</id>
        <label>SMYD3</label>
    </interactant>
    <organismsDiffer>false</organismsDiffer>
    <experiments>3</experiments>
</comment>
<comment type="interaction">
    <interactant intactId="EBI-602382">
        <id>Q16512</id>
    </interactant>
    <interactant intactId="EBI-413317">
        <id>Q96R06</id>
        <label>SPAG5</label>
    </interactant>
    <organismsDiffer>false</organismsDiffer>
    <experiments>3</experiments>
</comment>
<comment type="interaction">
    <interactant intactId="EBI-602382">
        <id>Q16512</id>
    </interactant>
    <interactant intactId="EBI-2212028">
        <id>Q9Y2D8</id>
        <label>SSX2IP</label>
    </interactant>
    <organismsDiffer>false</organismsDiffer>
    <experiments>3</experiments>
</comment>
<comment type="interaction">
    <interactant intactId="EBI-602382">
        <id>Q16512</id>
    </interactant>
    <interactant intactId="EBI-725557">
        <id>Q9NZ72</id>
        <label>STMN3</label>
    </interactant>
    <organismsDiffer>false</organismsDiffer>
    <experiments>3</experiments>
</comment>
<comment type="interaction">
    <interactant intactId="EBI-602382">
        <id>Q16512</id>
    </interactant>
    <interactant intactId="EBI-714135">
        <id>O75558</id>
        <label>STX11</label>
    </interactant>
    <organismsDiffer>false</organismsDiffer>
    <experiments>3</experiments>
</comment>
<comment type="interaction">
    <interactant intactId="EBI-602382">
        <id>Q16512</id>
    </interactant>
    <interactant intactId="EBI-10283466">
        <id>A1L190</id>
        <label>SYCE3</label>
    </interactant>
    <organismsDiffer>false</organismsDiffer>
    <experiments>3</experiments>
</comment>
<comment type="interaction">
    <interactant intactId="EBI-602382">
        <id>Q16512</id>
    </interactant>
    <interactant intactId="EBI-17438286">
        <id>Q8WTV1</id>
        <label>THAP3</label>
    </interactant>
    <organismsDiffer>false</organismsDiffer>
    <experiments>3</experiments>
</comment>
<comment type="interaction">
    <interactant intactId="EBI-602382">
        <id>Q16512</id>
    </interactant>
    <interactant intactId="EBI-359224">
        <id>Q13077</id>
        <label>TRAF1</label>
    </interactant>
    <organismsDiffer>false</organismsDiffer>
    <experiments>3</experiments>
</comment>
<comment type="interaction">
    <interactant intactId="EBI-602382">
        <id>Q16512</id>
    </interactant>
    <interactant intactId="EBI-355744">
        <id>Q12933</id>
        <label>TRAF2</label>
    </interactant>
    <organismsDiffer>false</organismsDiffer>
    <experiments>3</experiments>
</comment>
<comment type="interaction">
    <interactant intactId="EBI-602382">
        <id>Q16512</id>
    </interactant>
    <interactant intactId="EBI-719493">
        <id>P14373</id>
        <label>TRIM27</label>
    </interactant>
    <organismsDiffer>false</organismsDiffer>
    <experiments>3</experiments>
</comment>
<comment type="interaction">
    <interactant intactId="EBI-602382">
        <id>Q16512</id>
    </interactant>
    <interactant intactId="EBI-744794">
        <id>Q9BZW7</id>
        <label>TSGA10</label>
    </interactant>
    <organismsDiffer>false</organismsDiffer>
    <experiments>3</experiments>
</comment>
<comment type="interaction">
    <interactant intactId="EBI-602382">
        <id>Q16512</id>
    </interactant>
    <interactant intactId="EBI-17923957">
        <id>Q8IWV8-2</id>
        <label>UBR2</label>
    </interactant>
    <organismsDiffer>false</organismsDiffer>
    <experiments>3</experiments>
</comment>
<comment type="interaction">
    <interactant intactId="EBI-602382">
        <id>Q16512</id>
    </interactant>
    <interactant intactId="EBI-739895">
        <id>Q8N6Y0</id>
        <label>USHBP1</label>
    </interactant>
    <organismsDiffer>false</organismsDiffer>
    <experiments>3</experiments>
</comment>
<comment type="interaction">
    <interactant intactId="EBI-602382">
        <id>Q16512</id>
    </interactant>
    <interactant intactId="EBI-353844">
        <id>P08670</id>
        <label>VIM</label>
    </interactant>
    <organismsDiffer>false</organismsDiffer>
    <experiments>3</experiments>
</comment>
<comment type="interaction">
    <interactant intactId="EBI-602382">
        <id>Q16512</id>
    </interactant>
    <interactant intactId="EBI-11419867">
        <id>Q8TF47</id>
        <label>ZFP90</label>
    </interactant>
    <organismsDiffer>false</organismsDiffer>
    <experiments>3</experiments>
</comment>
<comment type="interaction">
    <interactant intactId="EBI-602382">
        <id>Q16512</id>
    </interactant>
    <interactant intactId="EBI-749023">
        <id>Q9UNY5</id>
        <label>ZNF232</label>
    </interactant>
    <organismsDiffer>false</organismsDiffer>
    <experiments>3</experiments>
</comment>
<comment type="interaction">
    <interactant intactId="EBI-602382">
        <id>Q16512</id>
    </interactant>
    <interactant intactId="EBI-25831733">
        <id>Q96MN9-2</id>
        <label>ZNF488</label>
    </interactant>
    <organismsDiffer>false</organismsDiffer>
    <experiments>3</experiments>
</comment>
<comment type="interaction">
    <interactant intactId="EBI-602382">
        <id>Q16512</id>
    </interactant>
    <interactant intactId="EBI-745520">
        <id>Q9P0T4</id>
        <label>ZNF581</label>
    </interactant>
    <organismsDiffer>false</organismsDiffer>
    <experiments>3</experiments>
</comment>
<comment type="interaction">
    <interactant intactId="EBI-602382">
        <id>Q16512</id>
    </interactant>
    <interactant intactId="EBI-527853">
        <id>Q9UGI0</id>
        <label>ZRANB1</label>
    </interactant>
    <organismsDiffer>false</organismsDiffer>
    <experiments>3</experiments>
</comment>
<comment type="interaction">
    <interactant intactId="EBI-602382">
        <id>Q16512</id>
    </interactant>
    <interactant intactId="EBI-26365850">
        <id>A1JU68</id>
        <label>yopM</label>
    </interactant>
    <organismsDiffer>true</organismsDiffer>
    <experiments>2</experiments>
</comment>
<comment type="subcellular location">
    <subcellularLocation>
        <location evidence="19 34">Cytoplasm</location>
    </subcellularLocation>
    <subcellularLocation>
        <location evidence="13">Nucleus</location>
    </subcellularLocation>
    <subcellularLocation>
        <location evidence="34">Endosome</location>
    </subcellularLocation>
    <subcellularLocation>
        <location evidence="3">Cell membrane</location>
        <topology evidence="3">Peripheral membrane protein</topology>
    </subcellularLocation>
    <subcellularLocation>
        <location evidence="19">Cleavage furrow</location>
    </subcellularLocation>
    <subcellularLocation>
        <location evidence="19">Midbody</location>
    </subcellularLocation>
    <text evidence="3 19">Associates with chromatin in a ligand-dependent manner. Localization to endosomes is mediated via its interaction with RHOB. Association to the cell membrane is dependent on Ser-377 phosphorylation. Accumulates during telophase at the cleavage furrow and finally concentrates around the midbody in cytokinesis.</text>
</comment>
<comment type="alternative products">
    <event type="alternative splicing"/>
    <isoform>
        <id>Q16512-1</id>
        <name>1</name>
        <sequence type="displayed"/>
    </isoform>
    <isoform>
        <id>Q16512-2</id>
        <name>2</name>
        <sequence type="described" ref="VSP_038143"/>
    </isoform>
    <isoform>
        <id>Q16512-3</id>
        <name>3</name>
        <sequence type="described" ref="VSP_039213 VSP_039214"/>
    </isoform>
</comment>
<comment type="tissue specificity">
    <text evidence="26">Found ubiquitously. Expressed in heart, brain, placenta, lung, skeletal muscle, kidney and pancreas. Expressed in numerous tumor cell lines, especially in breast tumor cells.</text>
</comment>
<comment type="domain">
    <text>The C1 domain does not bind the diacylglycerol (DAG).</text>
</comment>
<comment type="PTM">
    <text evidence="11 19">Autophosphorylated; preferably on serine. Phosphorylated during mitosis.</text>
</comment>
<comment type="PTM">
    <text evidence="1">Activated by limited proteolysis with trypsin.</text>
</comment>
<comment type="PTM">
    <text evidence="27">(Microbial infection) In case of infection, polyubiquitinated by the bacterial E3 ubiquitin-protein ligase SspH1, leading to its proteasomal degradation.</text>
</comment>
<comment type="similarity">
    <text evidence="38">Belongs to the protein kinase superfamily. AGC Ser/Thr protein kinase family. PKC subfamily.</text>
</comment>
<gene>
    <name type="primary">PKN1</name>
    <name type="synonym">PAK1</name>
    <name type="synonym">PKN</name>
    <name type="synonym">PRK1</name>
    <name type="synonym">PRKCL1</name>
</gene>
<organism>
    <name type="scientific">Homo sapiens</name>
    <name type="common">Human</name>
    <dbReference type="NCBI Taxonomy" id="9606"/>
    <lineage>
        <taxon>Eukaryota</taxon>
        <taxon>Metazoa</taxon>
        <taxon>Chordata</taxon>
        <taxon>Craniata</taxon>
        <taxon>Vertebrata</taxon>
        <taxon>Euteleostomi</taxon>
        <taxon>Mammalia</taxon>
        <taxon>Eutheria</taxon>
        <taxon>Euarchontoglires</taxon>
        <taxon>Primates</taxon>
        <taxon>Haplorrhini</taxon>
        <taxon>Catarrhini</taxon>
        <taxon>Hominidae</taxon>
        <taxon>Homo</taxon>
    </lineage>
</organism>
<dbReference type="EC" id="2.7.11.13" evidence="22"/>
<dbReference type="EMBL" id="D26181">
    <property type="protein sequence ID" value="BAA05169.1"/>
    <property type="molecule type" value="mRNA"/>
</dbReference>
<dbReference type="EMBL" id="S75546">
    <property type="protein sequence ID" value="AAB33345.1"/>
    <property type="molecule type" value="mRNA"/>
</dbReference>
<dbReference type="EMBL" id="U33053">
    <property type="protein sequence ID" value="AAC50209.1"/>
    <property type="molecule type" value="mRNA"/>
</dbReference>
<dbReference type="EMBL" id="AK123007">
    <property type="protein sequence ID" value="BAG53845.1"/>
    <property type="molecule type" value="mRNA"/>
</dbReference>
<dbReference type="EMBL" id="AK292130">
    <property type="protein sequence ID" value="BAF84819.1"/>
    <property type="molecule type" value="mRNA"/>
</dbReference>
<dbReference type="EMBL" id="AK313886">
    <property type="protein sequence ID" value="BAG36611.1"/>
    <property type="molecule type" value="mRNA"/>
</dbReference>
<dbReference type="EMBL" id="AC008569">
    <property type="status" value="NOT_ANNOTATED_CDS"/>
    <property type="molecule type" value="Genomic_DNA"/>
</dbReference>
<dbReference type="EMBL" id="BC040061">
    <property type="protein sequence ID" value="AAH40061.1"/>
    <property type="molecule type" value="mRNA"/>
</dbReference>
<dbReference type="EMBL" id="BC094766">
    <property type="protein sequence ID" value="AAH94766.1"/>
    <property type="molecule type" value="mRNA"/>
</dbReference>
<dbReference type="CCDS" id="CCDS42513.1">
    <molecule id="Q16512-1"/>
</dbReference>
<dbReference type="CCDS" id="CCDS42514.1">
    <molecule id="Q16512-2"/>
</dbReference>
<dbReference type="PIR" id="JC2129">
    <property type="entry name" value="JC2129"/>
</dbReference>
<dbReference type="PIR" id="S51162">
    <property type="entry name" value="S51162"/>
</dbReference>
<dbReference type="RefSeq" id="NP_002732.3">
    <molecule id="Q16512-1"/>
    <property type="nucleotide sequence ID" value="NM_002741.3"/>
</dbReference>
<dbReference type="RefSeq" id="NP_998725.1">
    <molecule id="Q16512-2"/>
    <property type="nucleotide sequence ID" value="NM_213560.3"/>
</dbReference>
<dbReference type="PDB" id="1CXZ">
    <property type="method" value="X-ray"/>
    <property type="resolution" value="2.20 A"/>
    <property type="chains" value="B=13-98"/>
</dbReference>
<dbReference type="PDB" id="1URF">
    <property type="method" value="NMR"/>
    <property type="chains" value="A=122-199"/>
</dbReference>
<dbReference type="PDB" id="2RMK">
    <property type="method" value="NMR"/>
    <property type="chains" value="B=122-199"/>
</dbReference>
<dbReference type="PDB" id="4NKG">
    <property type="method" value="X-ray"/>
    <property type="resolution" value="2.90 A"/>
    <property type="chains" value="B/D=122-199"/>
</dbReference>
<dbReference type="PDB" id="4OTD">
    <property type="method" value="X-ray"/>
    <property type="resolution" value="2.00 A"/>
    <property type="chains" value="A=605-942"/>
</dbReference>
<dbReference type="PDB" id="4OTG">
    <property type="method" value="X-ray"/>
    <property type="resolution" value="2.60 A"/>
    <property type="chains" value="A=605-942"/>
</dbReference>
<dbReference type="PDB" id="4OTH">
    <property type="method" value="X-ray"/>
    <property type="resolution" value="1.80 A"/>
    <property type="chains" value="A=605-942"/>
</dbReference>
<dbReference type="PDB" id="4OTI">
    <property type="method" value="X-ray"/>
    <property type="resolution" value="1.93 A"/>
    <property type="chains" value="A=605-942"/>
</dbReference>
<dbReference type="PDBsum" id="1CXZ"/>
<dbReference type="PDBsum" id="1URF"/>
<dbReference type="PDBsum" id="2RMK"/>
<dbReference type="PDBsum" id="4NKG"/>
<dbReference type="PDBsum" id="4OTD"/>
<dbReference type="PDBsum" id="4OTG"/>
<dbReference type="PDBsum" id="4OTH"/>
<dbReference type="PDBsum" id="4OTI"/>
<dbReference type="SMR" id="Q16512"/>
<dbReference type="BioGRID" id="111571">
    <property type="interactions" value="147"/>
</dbReference>
<dbReference type="CORUM" id="Q16512"/>
<dbReference type="DIP" id="DIP-34240N"/>
<dbReference type="ELM" id="Q16512"/>
<dbReference type="FunCoup" id="Q16512">
    <property type="interactions" value="2793"/>
</dbReference>
<dbReference type="IntAct" id="Q16512">
    <property type="interactions" value="114"/>
</dbReference>
<dbReference type="MINT" id="Q16512"/>
<dbReference type="STRING" id="9606.ENSP00000343325"/>
<dbReference type="BindingDB" id="Q16512"/>
<dbReference type="ChEMBL" id="CHEMBL3384"/>
<dbReference type="DrugBank" id="DB12010">
    <property type="generic name" value="Fostamatinib"/>
</dbReference>
<dbReference type="DrugCentral" id="Q16512"/>
<dbReference type="GuidetoPHARMACOLOGY" id="1520"/>
<dbReference type="GlyConnect" id="1737">
    <property type="glycosylation" value="1 N-Linked glycan (1 site)"/>
</dbReference>
<dbReference type="GlyCosmos" id="Q16512">
    <property type="glycosylation" value="3 sites, 2 glycans"/>
</dbReference>
<dbReference type="GlyGen" id="Q16512">
    <property type="glycosylation" value="5 sites, 1 N-linked glycan (1 site), 1 O-linked glycan (2 sites)"/>
</dbReference>
<dbReference type="iPTMnet" id="Q16512"/>
<dbReference type="MetOSite" id="Q16512"/>
<dbReference type="PhosphoSitePlus" id="Q16512"/>
<dbReference type="BioMuta" id="PKN1"/>
<dbReference type="DMDM" id="259016304"/>
<dbReference type="CPTAC" id="CPTAC-3003"/>
<dbReference type="jPOST" id="Q16512"/>
<dbReference type="MassIVE" id="Q16512"/>
<dbReference type="PaxDb" id="9606-ENSP00000343325"/>
<dbReference type="PeptideAtlas" id="Q16512"/>
<dbReference type="ProteomicsDB" id="60877">
    <molecule id="Q16512-1"/>
</dbReference>
<dbReference type="ProteomicsDB" id="60878">
    <molecule id="Q16512-2"/>
</dbReference>
<dbReference type="ProteomicsDB" id="60879">
    <molecule id="Q16512-3"/>
</dbReference>
<dbReference type="Pumba" id="Q16512"/>
<dbReference type="Antibodypedia" id="1296">
    <property type="antibodies" value="249 antibodies from 35 providers"/>
</dbReference>
<dbReference type="DNASU" id="5585"/>
<dbReference type="Ensembl" id="ENST00000242783.11">
    <molecule id="Q16512-1"/>
    <property type="protein sequence ID" value="ENSP00000242783.7"/>
    <property type="gene ID" value="ENSG00000123143.13"/>
</dbReference>
<dbReference type="Ensembl" id="ENST00000342216.8">
    <molecule id="Q16512-2"/>
    <property type="protein sequence ID" value="ENSP00000343325.4"/>
    <property type="gene ID" value="ENSG00000123143.13"/>
</dbReference>
<dbReference type="GeneID" id="5585"/>
<dbReference type="KEGG" id="hsa:5585"/>
<dbReference type="MANE-Select" id="ENST00000242783.11">
    <property type="protein sequence ID" value="ENSP00000242783.7"/>
    <property type="RefSeq nucleotide sequence ID" value="NM_002741.5"/>
    <property type="RefSeq protein sequence ID" value="NP_002732.3"/>
</dbReference>
<dbReference type="UCSC" id="uc002myp.4">
    <molecule id="Q16512-1"/>
    <property type="organism name" value="human"/>
</dbReference>
<dbReference type="AGR" id="HGNC:9405"/>
<dbReference type="CTD" id="5585"/>
<dbReference type="DisGeNET" id="5585"/>
<dbReference type="GeneCards" id="PKN1"/>
<dbReference type="HGNC" id="HGNC:9405">
    <property type="gene designation" value="PKN1"/>
</dbReference>
<dbReference type="HPA" id="ENSG00000123143">
    <property type="expression patterns" value="Low tissue specificity"/>
</dbReference>
<dbReference type="MalaCards" id="PKN1"/>
<dbReference type="MIM" id="601032">
    <property type="type" value="gene"/>
</dbReference>
<dbReference type="neXtProt" id="NX_Q16512"/>
<dbReference type="OpenTargets" id="ENSG00000123143"/>
<dbReference type="PharmGKB" id="PA33769"/>
<dbReference type="VEuPathDB" id="HostDB:ENSG00000123143"/>
<dbReference type="eggNOG" id="KOG0694">
    <property type="taxonomic scope" value="Eukaryota"/>
</dbReference>
<dbReference type="GeneTree" id="ENSGT00940000154990"/>
<dbReference type="HOGENOM" id="CLU_000288_132_1_1"/>
<dbReference type="InParanoid" id="Q16512"/>
<dbReference type="OMA" id="CTELRIE"/>
<dbReference type="OrthoDB" id="63267at2759"/>
<dbReference type="PAN-GO" id="Q16512">
    <property type="GO annotations" value="3 GO annotations based on evolutionary models"/>
</dbReference>
<dbReference type="PhylomeDB" id="Q16512"/>
<dbReference type="TreeFam" id="TF102005"/>
<dbReference type="BRENDA" id="2.7.11.13">
    <property type="organism ID" value="2681"/>
</dbReference>
<dbReference type="PathwayCommons" id="Q16512"/>
<dbReference type="Reactome" id="R-HSA-5625740">
    <property type="pathway name" value="RHO GTPases activate PKNs"/>
</dbReference>
<dbReference type="Reactome" id="R-HSA-5625886">
    <property type="pathway name" value="Activated PKN1 stimulates transcription of AR (androgen receptor) regulated genes KLK2 and KLK3"/>
</dbReference>
<dbReference type="Reactome" id="R-HSA-8980692">
    <property type="pathway name" value="RHOA GTPase cycle"/>
</dbReference>
<dbReference type="Reactome" id="R-HSA-9013026">
    <property type="pathway name" value="RHOB GTPase cycle"/>
</dbReference>
<dbReference type="Reactome" id="R-HSA-9013106">
    <property type="pathway name" value="RHOC GTPase cycle"/>
</dbReference>
<dbReference type="Reactome" id="R-HSA-9013149">
    <property type="pathway name" value="RAC1 GTPase cycle"/>
</dbReference>
<dbReference type="SABIO-RK" id="Q16512"/>
<dbReference type="SignaLink" id="Q16512"/>
<dbReference type="SIGNOR" id="Q16512"/>
<dbReference type="BioGRID-ORCS" id="5585">
    <property type="hits" value="15 hits in 1195 CRISPR screens"/>
</dbReference>
<dbReference type="CD-CODE" id="FB4E32DD">
    <property type="entry name" value="Presynaptic clusters and postsynaptic densities"/>
</dbReference>
<dbReference type="ChiTaRS" id="PKN1">
    <property type="organism name" value="human"/>
</dbReference>
<dbReference type="EvolutionaryTrace" id="Q16512"/>
<dbReference type="GeneWiki" id="Protein_kinase_N1"/>
<dbReference type="GenomeRNAi" id="5585"/>
<dbReference type="Pharos" id="Q16512">
    <property type="development level" value="Tchem"/>
</dbReference>
<dbReference type="PRO" id="PR:Q16512"/>
<dbReference type="Proteomes" id="UP000005640">
    <property type="component" value="Chromosome 19"/>
</dbReference>
<dbReference type="RNAct" id="Q16512">
    <property type="molecule type" value="protein"/>
</dbReference>
<dbReference type="Bgee" id="ENSG00000123143">
    <property type="expression patterns" value="Expressed in apex of heart and 142 other cell types or tissues"/>
</dbReference>
<dbReference type="ExpressionAtlas" id="Q16512">
    <property type="expression patterns" value="baseline and differential"/>
</dbReference>
<dbReference type="GO" id="GO:0032154">
    <property type="term" value="C:cleavage furrow"/>
    <property type="evidence" value="ECO:0000314"/>
    <property type="project" value="UniProtKB"/>
</dbReference>
<dbReference type="GO" id="GO:0005737">
    <property type="term" value="C:cytoplasm"/>
    <property type="evidence" value="ECO:0000314"/>
    <property type="project" value="UniProtKB"/>
</dbReference>
<dbReference type="GO" id="GO:0005829">
    <property type="term" value="C:cytosol"/>
    <property type="evidence" value="ECO:0000304"/>
    <property type="project" value="Reactome"/>
</dbReference>
<dbReference type="GO" id="GO:0005768">
    <property type="term" value="C:endosome"/>
    <property type="evidence" value="ECO:0000314"/>
    <property type="project" value="UniProtKB"/>
</dbReference>
<dbReference type="GO" id="GO:0030496">
    <property type="term" value="C:midbody"/>
    <property type="evidence" value="ECO:0000314"/>
    <property type="project" value="UniProtKB"/>
</dbReference>
<dbReference type="GO" id="GO:0005654">
    <property type="term" value="C:nucleoplasm"/>
    <property type="evidence" value="ECO:0000304"/>
    <property type="project" value="Reactome"/>
</dbReference>
<dbReference type="GO" id="GO:0005634">
    <property type="term" value="C:nucleus"/>
    <property type="evidence" value="ECO:0000314"/>
    <property type="project" value="UniProtKB"/>
</dbReference>
<dbReference type="GO" id="GO:0032991">
    <property type="term" value="C:protein-containing complex"/>
    <property type="evidence" value="ECO:0000314"/>
    <property type="project" value="MGI"/>
</dbReference>
<dbReference type="GO" id="GO:0005524">
    <property type="term" value="F:ATP binding"/>
    <property type="evidence" value="ECO:0007669"/>
    <property type="project" value="UniProtKB-KW"/>
</dbReference>
<dbReference type="GO" id="GO:0003682">
    <property type="term" value="F:chromatin binding"/>
    <property type="evidence" value="ECO:0000314"/>
    <property type="project" value="UniProtKB"/>
</dbReference>
<dbReference type="GO" id="GO:0004697">
    <property type="term" value="F:diacylglycerol-dependent serine/threonine kinase activity"/>
    <property type="evidence" value="ECO:0000269"/>
    <property type="project" value="Reactome"/>
</dbReference>
<dbReference type="GO" id="GO:0042393">
    <property type="term" value="F:histone binding"/>
    <property type="evidence" value="ECO:0000314"/>
    <property type="project" value="UniProtKB"/>
</dbReference>
<dbReference type="GO" id="GO:0042826">
    <property type="term" value="F:histone deacetylase binding"/>
    <property type="evidence" value="ECO:0000314"/>
    <property type="project" value="UniProtKB"/>
</dbReference>
<dbReference type="GO" id="GO:0035402">
    <property type="term" value="F:histone H3T11 kinase activity"/>
    <property type="evidence" value="ECO:0000314"/>
    <property type="project" value="UniProtKB"/>
</dbReference>
<dbReference type="GO" id="GO:0050681">
    <property type="term" value="F:nuclear androgen receptor binding"/>
    <property type="evidence" value="ECO:0000314"/>
    <property type="project" value="UniProtKB"/>
</dbReference>
<dbReference type="GO" id="GO:0004672">
    <property type="term" value="F:protein kinase activity"/>
    <property type="evidence" value="ECO:0000304"/>
    <property type="project" value="ProtInc"/>
</dbReference>
<dbReference type="GO" id="GO:0005080">
    <property type="term" value="F:protein kinase C binding"/>
    <property type="evidence" value="ECO:0000353"/>
    <property type="project" value="UniProtKB"/>
</dbReference>
<dbReference type="GO" id="GO:0106310">
    <property type="term" value="F:protein serine kinase activity"/>
    <property type="evidence" value="ECO:0007669"/>
    <property type="project" value="RHEA"/>
</dbReference>
<dbReference type="GO" id="GO:0004674">
    <property type="term" value="F:protein serine/threonine kinase activity"/>
    <property type="evidence" value="ECO:0000314"/>
    <property type="project" value="UniProtKB"/>
</dbReference>
<dbReference type="GO" id="GO:0031267">
    <property type="term" value="F:small GTPase binding"/>
    <property type="evidence" value="ECO:0000314"/>
    <property type="project" value="UniProtKB"/>
</dbReference>
<dbReference type="GO" id="GO:0003713">
    <property type="term" value="F:transcription coactivator activity"/>
    <property type="evidence" value="ECO:0000314"/>
    <property type="project" value="UniProtKB"/>
</dbReference>
<dbReference type="GO" id="GO:0001783">
    <property type="term" value="P:B cell apoptotic process"/>
    <property type="evidence" value="ECO:0007669"/>
    <property type="project" value="Ensembl"/>
</dbReference>
<dbReference type="GO" id="GO:0001782">
    <property type="term" value="P:B cell homeostasis"/>
    <property type="evidence" value="ECO:0007669"/>
    <property type="project" value="Ensembl"/>
</dbReference>
<dbReference type="GO" id="GO:0010631">
    <property type="term" value="P:epithelial cell migration"/>
    <property type="evidence" value="ECO:0000315"/>
    <property type="project" value="UniProtKB"/>
</dbReference>
<dbReference type="GO" id="GO:0006972">
    <property type="term" value="P:hyperosmotic response"/>
    <property type="evidence" value="ECO:0007669"/>
    <property type="project" value="Ensembl"/>
</dbReference>
<dbReference type="GO" id="GO:0035556">
    <property type="term" value="P:intracellular signal transduction"/>
    <property type="evidence" value="ECO:0000318"/>
    <property type="project" value="GO_Central"/>
</dbReference>
<dbReference type="GO" id="GO:0030889">
    <property type="term" value="P:negative regulation of B cell proliferation"/>
    <property type="evidence" value="ECO:0007669"/>
    <property type="project" value="Ensembl"/>
</dbReference>
<dbReference type="GO" id="GO:0043687">
    <property type="term" value="P:post-translational protein modification"/>
    <property type="evidence" value="ECO:0000314"/>
    <property type="project" value="UniProtKB"/>
</dbReference>
<dbReference type="GO" id="GO:0006468">
    <property type="term" value="P:protein phosphorylation"/>
    <property type="evidence" value="ECO:0000314"/>
    <property type="project" value="UniProtKB"/>
</dbReference>
<dbReference type="GO" id="GO:0060765">
    <property type="term" value="P:regulation of androgen receptor signaling pathway"/>
    <property type="evidence" value="ECO:0000304"/>
    <property type="project" value="Reactome"/>
</dbReference>
<dbReference type="GO" id="GO:2000145">
    <property type="term" value="P:regulation of cell motility"/>
    <property type="evidence" value="ECO:0000315"/>
    <property type="project" value="UniProtKB"/>
</dbReference>
<dbReference type="GO" id="GO:0002634">
    <property type="term" value="P:regulation of germinal center formation"/>
    <property type="evidence" value="ECO:0007669"/>
    <property type="project" value="Ensembl"/>
</dbReference>
<dbReference type="GO" id="GO:0002637">
    <property type="term" value="P:regulation of immunoglobulin production"/>
    <property type="evidence" value="ECO:0007669"/>
    <property type="project" value="Ensembl"/>
</dbReference>
<dbReference type="GO" id="GO:0006357">
    <property type="term" value="P:regulation of transcription by RNA polymerase II"/>
    <property type="evidence" value="ECO:0000314"/>
    <property type="project" value="UniProtKB"/>
</dbReference>
<dbReference type="GO" id="GO:0003014">
    <property type="term" value="P:renal system process"/>
    <property type="evidence" value="ECO:0007669"/>
    <property type="project" value="Ensembl"/>
</dbReference>
<dbReference type="GO" id="GO:0007165">
    <property type="term" value="P:signal transduction"/>
    <property type="evidence" value="ECO:0000304"/>
    <property type="project" value="ProtInc"/>
</dbReference>
<dbReference type="GO" id="GO:0048536">
    <property type="term" value="P:spleen development"/>
    <property type="evidence" value="ECO:0007669"/>
    <property type="project" value="Ensembl"/>
</dbReference>
<dbReference type="CDD" id="cd08687">
    <property type="entry name" value="C2_PKN-like"/>
    <property type="match status" value="1"/>
</dbReference>
<dbReference type="CDD" id="cd11630">
    <property type="entry name" value="HR1_PKN1_2"/>
    <property type="match status" value="1"/>
</dbReference>
<dbReference type="CDD" id="cd11636">
    <property type="entry name" value="HR1_PKN1_3"/>
    <property type="match status" value="1"/>
</dbReference>
<dbReference type="CDD" id="cd11622">
    <property type="entry name" value="HR1_PKN_1"/>
    <property type="match status" value="1"/>
</dbReference>
<dbReference type="CDD" id="cd05589">
    <property type="entry name" value="STKc_PKN"/>
    <property type="match status" value="1"/>
</dbReference>
<dbReference type="FunFam" id="1.10.287.160:FF:000001">
    <property type="entry name" value="Putative serine/threonine-protein kinase N2"/>
    <property type="match status" value="1"/>
</dbReference>
<dbReference type="FunFam" id="1.10.287.160:FF:000002">
    <property type="entry name" value="Putative serine/threonine-protein kinase N2"/>
    <property type="match status" value="1"/>
</dbReference>
<dbReference type="FunFam" id="1.10.287.160:FF:000003">
    <property type="entry name" value="Putative serine/threonine-protein kinase N2"/>
    <property type="match status" value="1"/>
</dbReference>
<dbReference type="FunFam" id="3.30.200.20:FF:000058">
    <property type="entry name" value="Putative serine/threonine-protein kinase N2"/>
    <property type="match status" value="1"/>
</dbReference>
<dbReference type="FunFam" id="1.10.510.10:FF:000038">
    <property type="entry name" value="serine/threonine-protein kinase N2 isoform X1"/>
    <property type="match status" value="1"/>
</dbReference>
<dbReference type="Gene3D" id="1.10.287.160">
    <property type="entry name" value="HR1 repeat"/>
    <property type="match status" value="3"/>
</dbReference>
<dbReference type="Gene3D" id="3.30.200.20">
    <property type="entry name" value="Phosphorylase Kinase, domain 1"/>
    <property type="match status" value="1"/>
</dbReference>
<dbReference type="Gene3D" id="1.10.510.10">
    <property type="entry name" value="Transferase(Phosphotransferase) domain 1"/>
    <property type="match status" value="1"/>
</dbReference>
<dbReference type="IDEAL" id="IID00416"/>
<dbReference type="InterPro" id="IPR000961">
    <property type="entry name" value="AGC-kinase_C"/>
</dbReference>
<dbReference type="InterPro" id="IPR000008">
    <property type="entry name" value="C2_dom"/>
</dbReference>
<dbReference type="InterPro" id="IPR035892">
    <property type="entry name" value="C2_domain_sf"/>
</dbReference>
<dbReference type="InterPro" id="IPR037784">
    <property type="entry name" value="C2_PKN"/>
</dbReference>
<dbReference type="InterPro" id="IPR011072">
    <property type="entry name" value="HR1_rho-bd"/>
</dbReference>
<dbReference type="InterPro" id="IPR036274">
    <property type="entry name" value="HR1_rpt_sf"/>
</dbReference>
<dbReference type="InterPro" id="IPR011009">
    <property type="entry name" value="Kinase-like_dom_sf"/>
</dbReference>
<dbReference type="InterPro" id="IPR017892">
    <property type="entry name" value="Pkinase_C"/>
</dbReference>
<dbReference type="InterPro" id="IPR037317">
    <property type="entry name" value="PKN1_HR1_2"/>
</dbReference>
<dbReference type="InterPro" id="IPR037313">
    <property type="entry name" value="PKN_HR1_1"/>
</dbReference>
<dbReference type="InterPro" id="IPR000719">
    <property type="entry name" value="Prot_kinase_dom"/>
</dbReference>
<dbReference type="InterPro" id="IPR017441">
    <property type="entry name" value="Protein_kinase_ATP_BS"/>
</dbReference>
<dbReference type="InterPro" id="IPR008271">
    <property type="entry name" value="Ser/Thr_kinase_AS"/>
</dbReference>
<dbReference type="PANTHER" id="PTHR24351">
    <property type="entry name" value="RIBOSOMAL PROTEIN S6 KINASE"/>
    <property type="match status" value="1"/>
</dbReference>
<dbReference type="Pfam" id="PF02185">
    <property type="entry name" value="HR1"/>
    <property type="match status" value="3"/>
</dbReference>
<dbReference type="Pfam" id="PF00069">
    <property type="entry name" value="Pkinase"/>
    <property type="match status" value="1"/>
</dbReference>
<dbReference type="Pfam" id="PF00433">
    <property type="entry name" value="Pkinase_C"/>
    <property type="match status" value="1"/>
</dbReference>
<dbReference type="SMART" id="SM00742">
    <property type="entry name" value="Hr1"/>
    <property type="match status" value="3"/>
</dbReference>
<dbReference type="SMART" id="SM00133">
    <property type="entry name" value="S_TK_X"/>
    <property type="match status" value="1"/>
</dbReference>
<dbReference type="SMART" id="SM00220">
    <property type="entry name" value="S_TKc"/>
    <property type="match status" value="1"/>
</dbReference>
<dbReference type="SUPFAM" id="SSF49562">
    <property type="entry name" value="C2 domain (Calcium/lipid-binding domain, CaLB)"/>
    <property type="match status" value="1"/>
</dbReference>
<dbReference type="SUPFAM" id="SSF46585">
    <property type="entry name" value="HR1 repeat"/>
    <property type="match status" value="3"/>
</dbReference>
<dbReference type="SUPFAM" id="SSF56112">
    <property type="entry name" value="Protein kinase-like (PK-like)"/>
    <property type="match status" value="1"/>
</dbReference>
<dbReference type="PROSITE" id="PS51285">
    <property type="entry name" value="AGC_KINASE_CTER"/>
    <property type="match status" value="1"/>
</dbReference>
<dbReference type="PROSITE" id="PS50004">
    <property type="entry name" value="C2"/>
    <property type="match status" value="1"/>
</dbReference>
<dbReference type="PROSITE" id="PS00107">
    <property type="entry name" value="PROTEIN_KINASE_ATP"/>
    <property type="match status" value="1"/>
</dbReference>
<dbReference type="PROSITE" id="PS50011">
    <property type="entry name" value="PROTEIN_KINASE_DOM"/>
    <property type="match status" value="1"/>
</dbReference>
<dbReference type="PROSITE" id="PS00108">
    <property type="entry name" value="PROTEIN_KINASE_ST"/>
    <property type="match status" value="1"/>
</dbReference>
<dbReference type="PROSITE" id="PS51860">
    <property type="entry name" value="REM_1"/>
    <property type="match status" value="3"/>
</dbReference>
<sequence length="942" mass="103932">MASDAVQSEPRSWSLLEQLGLAGADLAAPGVQQQLELERERLRREIRKELKLKEGAENLRRATTDLGRSLGPVELLLRGSSRRLDLLHQQLQELHAHVVLPDPAATHDGPQSPGAGGPTCSATNLSRVAGLEKQLAIELKVKQGAENMIQTYSNGSTKDRKLLLTAQQMLQDSKTKIDIIRMQLRRALQAGQLENQAAPDDTQGSPDLGAVELRIEELRHHFRVEHAVAEGAKNVLRLLSAAKAPDRKAVSEAQEKLTESNQKLGLLREALERRLGELPADHPKGRLLREELAAASSAAFSTRLAGPFPATHYSTLCKPAPLTGTLEVRVVGCRDLPETIPWNPTPSMGGPGTPDSRPPFLSRPARGLYSRSGSLSGRSSLKAEAENTSEVSTVLKLDNTVVGQTSWKPCGPNAWDQSFTLELERARELELAVFWRDQRGLCALKFLKLEDFLDNERHEVQLDMEPQGCLVAEVTFRNPVIERIPRLRRQKKIFSKQQGKAFQRARQMNIDVATWVRLLRRLIPNATGTGTFSPGASPGSEARTTGDISVEKLNLGTDSDSSPQKSSRDPPSSPSSLSSPIQESTAPELPSETQETPGPALCSPLRKSPLTLEDFKFLAVLGRGHFGKVLLSEFRPSGELFAIKALKKGDIVARDEVESLMCEKRILAAVTSAGHPFLVNLFGCFQTPEHVCFVMEYSAGGDLMLHIHSDVFSEPRAIFYSACVVLGLQFLHEHKIVYRDLKLDNLLLDTEGYVKIADFGLCKEGMGYGDRTSTFCGTPEFLAPEVLTDTSYTRAVDWWGLGVLLYEMLVGESPFPGDDEEEVFDSIVNDEVRYPRFLSAEAIGIMRRLLRRNPERRLGSSERDAEDVKKQPFFRTLGWEALLARRLPPPFVPTLSGRTDVSNFDEEFTGEAPTLSPPRDARPLTAAEQAAFLDFDFVAGGC</sequence>